<proteinExistence type="evidence at protein level"/>
<sequence length="3021" mass="329578">MSTLPKPQRKTKRNTIRRPQDVKFPGGGQIVGGVYVLPRRGPRLGVRATRKTSERSQPRGRRQPIPKARRSEGRSWAQPGYPWPLYGNEGCGWAGWLLSPRGSRPSWGPNDPRRRSRNLGKVIDTLTCGFADLMGYIPLVGAPVGGVARALAHGVRALEDGINFATGNLPGCSFSIFLLALFSCLIHPAASLEWRNTSGLYVLTNDCSNSSIVYEADDVILHTPGCVPCVQDGNTSTCWTPVTPTVAVRYVGATTASIRSHVDLLVGAATMCSALYVGDMCGAVFLVGQAFTFRPRRHQTVQTCNCSLYPGHLSGHRMAWDMMMNWSPAVGMVVAHVLRLPQTLFDIMAGAHWGILAGLAYYSMQGNWAKVAIIMVMFSGVDAHTYTTGGTASRHTQAFAGLFDIGPQQKLQLVNTNGSWHINSTALNCNESINTGFIAGLFYYHKFNSTGCPQRLSSCKPITFFRQGWGPLTDANITGPSDDRPYCWHYAPRPCDIVPASSVCGPVYCFTPSPVVVGTTDARGVPTYTWGENEKDVFLLKSQRPPSGRWFGCSWMNSTGFLKTCGAPPCNIYGGEGNPHNESDLFCPTDCFRKHPETTYSRCGAGPWLTPRCMVDYPYRLWHYPCTVDFRLFKVRMFVGGFEHRFTAACNWTRGERCDIEDRDRSEQHPLLHSTTELAILPCSFTPMPALSTGLIHLHQNIVDVQYLYGVGSGMVGWALKWEFVILVFLLLADARVCVALWLMLMISQTEAALENLVTLNAVAAAGTHGIGWYLVAFCAAWYVRGKLVPLVTYSLTGLWSLALLVLLLPQRAYAWSGEDSATLGAGVLVLFGFFTLSPWYKHWIGRLMWWNQYTICRCESALHVWVPPLLARGSRDGVILLTSLLYPSLIFDITKLLMAVLGPLYLIQATITTTPYFVRAHVLVRLCMLVRSVIGGKYFQMIILSIGRWFNTYLYDHLAPMQHWAAAGLKDLAVATEPVIFSPMEIKVITWGADTAACGDILCGLPVSARLGREVLLGPADDYREMGWRLLAPITAYAQQTRGLLGTIVTSLTGRDKNVVTGEVQVLSTATQTFLGTTVGGVIWTVYHGAGSRTLAGAKHPALQMYTNVDQDLVGWPAPPGAKSLEPCACGSSDLYLVTRDADVIPARRRGDSTASLLSPRPLACLKGSSGGPVMCPSGHVAGIFRAAVCTRGVAKSLQFIPVETLSTQARSPSFSDNSTPPAVPQSYQVGYLHAPTGSGKSTKVPAAYVAQGYNVLVLNPSVAATLGFGSFMSRAYGIDPNIRTGNRTVTTGAKLTYSTYGKFLADGGCSGGAYDVIICDECHAQDATSILGIGTVLDQAETAGVRLTVLATATPPGSITVPHSNIEEVALGSEGEIPFYGKAIPIALLKGGRHLIFCHSKKKCDEIASKLRGMGLNAVAYYRGLDVSVIPTTGDVVVCATDALMTGFTGDFDSVIDCNVAVEQYVDFSLDPTFSIETRTAPQDAVSRSQRRGRTGRGRLGTYRYVASGERPSGMFDSVVLCECYDAGCSWYDLQPAETTVRLRAYLSTPGLPVCQDHLDFWESVFTGLTHIDAHFLSQTKQQGLNFSYLTAYQATVCARAQAPPPSWDEMWKCLVRLKPTLHGPTPLLYRLGPVQNETCLTHPITKYLMACMSADLEVTTSTWVLLGGVLAALAAYCLSVGCVVIVGHIELEGKPALVPDKEVLYQQYDEMEECSQAAPYIEQAQVIAHQFKEKILGLLQRATQQQAVIEPIVTTNWQKLEAFWHKHMWNFVSGIQYLAGLSTLPGNPAVASLMAFTASVTSPLTTNQTMFFNILGGWVATHLAGPQSSSAFVVSGLAGAAIGGIGLGRVLLDILAGYGAGVSGALVAFKIMGGECPTAEDMVNLLPAILSPGALVVGVICAAILRRHVGPGEGAVQWMNRLIAFASRGNHVSPTHYVPESDAAARVTALLSSLTVTSLLRRLHQWINEDYPSPCSDDWLRTIWDWVCSVLADFKAWLSAKIMPALPGLPFISCQKGYKGVWRGDGVMSTRCPCGAAITGHVKNGSMRLAGPRTCANMWHGTFPINEYTTGPSTPCPSPNYTRALWRVAANSYVEVRRVGDFHYITGATEDELKCPCQVPAAEFFTEVDGVRLHRYAPPCKPLLRDDITFMVGLHSYTIGSQLPCEPEPDVSVLTSMLRDPSHITAETAARRLARGSPPSEASSSASQLSAPSLKATCQTHRPHPDAELVDANLLWRQEMGSNITRVESETKVVVLDSFEPLRAETDDVEPSVAAECFKKPPKYPPALPIWARPDYNPPLLDRWKAPDYVPPTVHGCALPPRGAPPVPPPRRKRTIQLDGSNVSAALAALAEKSFPSSKPQEENSSSSGVDTQSSTTSKVPPSPGGESDSESCSSMPPLEGEPGDPDLSCDSWSTVSDSEEQSVVCCSMSYSWTGALITPCSAEEEKLPISPLSNSLLRHHNLVYSTSSRSASQRQKKVTFDRLQVLDDHYKTALKEVKERASRVKARMLTIEEACALVPPHSARSKFGYSAKDVRSLSSRAINQIRSVWEDLLEDTTTPIPTTIMAKNEVFCVDPAKGGRKPARLIVYPDLGVRVCEKRALYDVIQKLSIETMGPAYGFQYSPQQRVERLLKMWTSKKTPLGFSYDTRCFDSTVTEQDIRVEEEIYQCCNLEPEARKVISSLTERLYCGGPMFNSKGAQCGYRRCRASGVLPTSFGNTITCYIKATAAAKAANLRNPDFLVCGDDLVVVAESDGVDEDRAALRAFTEAMTRYSAPPGDAPQATYDLELITSCSSNVSVARDDKGRRYYYLTRDATTPLARAAWETARHTPVNSWLGNIIMYAPTIWVRMVMMTHFFSILQSQEILDRPLDFEMYGATYSVTPLDLPAIIERLHGLSAFTLHSYSPVELNRVAGTLRKLGCPPLRAWRHRARAVRAKLIAQGGKAKICGLYLFNWAVRTKTNLTPLPAAGQLDLSSWFTVGVGGNDIYHSVSRARTRHLLLCLLLLTVGVGIFLLPAR</sequence>
<protein>
    <recommendedName>
        <fullName>Genome polyprotein</fullName>
    </recommendedName>
    <component>
        <recommendedName>
            <fullName>Core protein precursor</fullName>
        </recommendedName>
        <alternativeName>
            <fullName>Capsid protein C</fullName>
        </alternativeName>
        <alternativeName>
            <fullName>p23</fullName>
        </alternativeName>
    </component>
    <component>
        <recommendedName>
            <fullName>Mature core protein</fullName>
        </recommendedName>
        <alternativeName>
            <fullName>p21</fullName>
        </alternativeName>
    </component>
    <component>
        <recommendedName>
            <fullName>Envelope glycoprotein E1</fullName>
        </recommendedName>
        <alternativeName>
            <fullName>gp32</fullName>
        </alternativeName>
        <alternativeName>
            <fullName>gp35</fullName>
        </alternativeName>
    </component>
    <component>
        <recommendedName>
            <fullName>Envelope glycoprotein E2</fullName>
        </recommendedName>
        <alternativeName>
            <fullName>NS1</fullName>
        </alternativeName>
        <alternativeName>
            <fullName>gp68</fullName>
        </alternativeName>
        <alternativeName>
            <fullName>gp70</fullName>
        </alternativeName>
    </component>
    <component>
        <recommendedName>
            <fullName>Viroporin p7</fullName>
        </recommendedName>
    </component>
    <component>
        <recommendedName>
            <fullName>Protease NS2</fullName>
            <shortName>p23</shortName>
            <ecNumber evidence="3">3.4.22.-</ecNumber>
        </recommendedName>
        <alternativeName>
            <fullName>Non-structural protein 2</fullName>
            <shortName>NS2</shortName>
        </alternativeName>
    </component>
    <component>
        <recommendedName>
            <fullName>Serine protease/helicase NS3</fullName>
            <ecNumber evidence="5">3.4.21.98</ecNumber>
            <ecNumber evidence="5">3.6.1.15</ecNumber>
            <ecNumber evidence="5">3.6.4.13</ecNumber>
        </recommendedName>
        <alternativeName>
            <fullName>Hepacivirin</fullName>
        </alternativeName>
        <alternativeName>
            <fullName evidence="5">NS3 helicase</fullName>
        </alternativeName>
        <alternativeName>
            <fullName evidence="5">NS3 protease</fullName>
        </alternativeName>
        <alternativeName>
            <fullName>NS3P</fullName>
        </alternativeName>
        <alternativeName>
            <fullName>Viroporin p70</fullName>
        </alternativeName>
    </component>
    <component>
        <recommendedName>
            <fullName>Non-structural protein 4A</fullName>
            <shortName>NS4A</shortName>
        </recommendedName>
        <alternativeName>
            <fullName>p8</fullName>
        </alternativeName>
    </component>
    <component>
        <recommendedName>
            <fullName>Non-structural protein 4B</fullName>
            <shortName>NS4B</shortName>
        </recommendedName>
        <alternativeName>
            <fullName>p27</fullName>
        </alternativeName>
    </component>
    <component>
        <recommendedName>
            <fullName>Non-structural protein 5A</fullName>
            <shortName>NS5A</shortName>
        </recommendedName>
        <alternativeName>
            <fullName>p56/58</fullName>
        </alternativeName>
    </component>
    <component>
        <recommendedName>
            <fullName>RNA-directed RNA polymerase</fullName>
            <ecNumber evidence="5">2.7.7.48</ecNumber>
        </recommendedName>
        <alternativeName>
            <fullName>NS5B</fullName>
        </alternativeName>
        <alternativeName>
            <fullName>p68</fullName>
        </alternativeName>
    </component>
</protein>
<name>POLG_HCVNZ</name>
<comment type="function">
    <molecule>Mature core protein</molecule>
    <text evidence="2 4 5 6 11 20 21">Packages viral RNA to form a viral nucleocapsid, and promotes virion budding (Probable). Participates in the viral particle production as a result of its interaction with the non-structural protein 5A (By similarity). Binds RNA and may function as a RNA chaperone to induce the RNA structural rearrangements taking place during virus replication (By similarity). Modulates viral translation initiation by interacting with viral IRES and 40S ribosomal subunit (By similarity). Affects various cell signaling pathways, host immunity and lipid metabolism (Probable). Prevents the establishment of cellular antiviral state by blocking the interferon-alpha/beta (IFN-alpha/beta) and IFN-gamma signaling pathways and by blocking the formation of phosphorylated STAT1 and promoting ubiquitin-mediated proteasome-dependent degradation of STAT1 (By similarity). Activates STAT3 leading to cellular transformation (By similarity). Regulates the activity of cellular genes, including c-myc and c-fos (By similarity). May repress the promoter of p53, and sequester CREB3 and SP110 isoform 3/Sp110b in the cytoplasm (By similarity). Represses cell cycle negative regulating factor CDKN1A, thereby interrupting an important check point of normal cell cycle regulation (By similarity). Targets transcription factors involved in the regulation of inflammatory responses and in the immune response: suppresses TNF-induced NF-kappa-B activation, and activates AP-1 (By similarity). Binds to dendritic cells (DCs) via C1QR1, resulting in down-regulation of T-lymphocytes proliferation (By similarity). Alters lipid metabolism by interacting with hepatocellular proteins involved in lipid accumulation and storage (By similarity). Induces up-regulation of FAS promoter activity, and thereby contributes to the increased triglyceride accumulation in hepatocytes (steatosis) (PubMed:17188392).</text>
</comment>
<comment type="function">
    <molecule>Envelope glycoprotein E1</molecule>
    <text evidence="5">Forms a heterodimer with envelope glycoprotein E2, which mediates virus attachment to the host cell, virion internalization through clathrin-dependent endocytosis and fusion with host membrane (By similarity). Fusion with the host cell is most likely mediated by both E1 and E2, through conformational rearrangements of the heterodimer required for fusion rather than a classical class II fusion mechanism (By similarity). E1/E2 heterodimer binds host apolipoproteins such as APOB and ApoE thereby forming a lipo-viro-particle (LVP) (By similarity). APOE associated to the LVP allows the initial virus attachment to cell surface receptors such as the heparan sulfate proteoglycans (HSPGs), syndecan-1 (SDC1), syndecan-1 (SDC2), the low-density lipoprotein receptor (LDLR) and scavenger receptor class B type I (SCARB1) (By similarity). The cholesterol transfer activity of SCARB1 allows E2 exposure and binding of E2 to SCARB1 and the tetraspanin CD81 (By similarity). E1/E2 heterodimer binding on CD81 activates the epithelial growth factor receptor (EGFR) signaling pathway (By similarity). Diffusion of the complex E1-E2-EGFR-SCARB1-CD81 to the cell lateral membrane allows further interaction with Claudin 1 (CLDN1) and occludin (OCLN) to finally trigger HCV entry (By similarity).</text>
</comment>
<comment type="function">
    <molecule>Envelope glycoprotein E2</molecule>
    <text evidence="4 5">Forms a heterodimer with envelope glycoprotein E1, which mediates virus attachment to the host cell, virion internalization through clathrin-dependent endocytosis and fusion with host membrane (By similarity). Fusion with the host cell is most likely mediated by both E1 and E2, through conformational rearrangements of the heterodimer required for fusion rather than a classical class II fusion mechanism (By similarity). The interaction between envelope glycoprotein E2 and host apolipoprotein E/APOE allows the proper assembly, maturation and infectivity of the viral particles (By similarity). This interaction is probably promoted via the up-regulation of cellular autophagy by the virus (By similarity). E1/E2 heterodimer binds host apolipoproteins such as APOB and APOE thereby forming a lipo-viro-particle (LVP) (By similarity). APOE associated to the LVP allows the initial virus attachment to cell surface receptors such as the heparan sulfate proteoglycans (HSPGs), syndecan-1 (SDC1), syndecan-1 (SDC2), the low-density lipoprotein receptor (LDLR) and scavenger receptor class B type I (SCARB1) (By similarity). The cholesterol transfer activity of SCARB1 allows E2 exposure and binding of E2 to SCARB1 and the tetraspanin CD81 (By similarity). E1/E2 heterodimer binding on CD81 activates the epithelial growth factor receptor (EGFR) signaling pathway (By similarity). Diffusion of the complex E1-E2-EGFR-SCARB1-CD81 to the cell lateral membrane allows further interaction with Claudin 1 (CLDN1) and occludin (OCLN) to finally trigger HCV entry (By similarity). Inhibits host EIF2AK2/PKR activation, preventing the establishment of an antiviral state (By similarity). Viral ligand for CD209/DC-SIGN and CLEC4M/DC-SIGNR, which are respectively found on dendritic cells (DCs), and on liver sinusoidal endothelial cells and macrophage-like cells of lymph node sinuses (By similarity). These interactions allow the capture of circulating HCV particles by these cells and subsequent facilitated transmission to permissive cells such as hepatocytes and lymphocyte subpopulations (By similarity). The interaction between E2 and host amino acid transporter complex formed by SLC3A2 and SLC7A5/LAT1 may facilitate viral entry into host cell (By similarity).</text>
</comment>
<comment type="function">
    <molecule>Viroporin p7</molecule>
    <text evidence="5 11 21">Ion channel protein that acts as a viroporin and plays an essential role in the assembly, envelopment and secretion of viral particles (By similarity). Regulates the host cell secretory pathway, which induces the intracellular retention of viral glycoproteins and favors assembly of viral particles (By similarity). Creates a pore in acidic organelles and releases Ca(2+) and H(+) in the cytoplasm of infected cells, leading to a productive viral infection (By similarity). High levels of cytoplasmic Ca(2+) may trigger membrane trafficking and transport of viral ER-associated proteins to viroplasms, sites of viral genome replication (Probable). This ionic imbalance induces the assembly of the inflammasome complex, which triggers the maturation of pro-IL-1beta into IL-1beta through the action of caspase-1 (By similarity). Targets also host mitochondria and induces mitochondrial depolarization (By similarity). In addition of its role as a viroporin, acts as a lipid raft adhesion factor (By similarity).</text>
</comment>
<comment type="function">
    <molecule>Protease NS2</molecule>
    <text evidence="3 5">Cysteine protease required for the proteolytic auto-cleavage between the non-structural proteins NS2 and NS3 (By similarity). The N-terminus of NS3 is required for the function of NS2 protease (active region NS2-3) (By similarity). Promotes the initiation of viral particle assembly by mediating the interaction between structural and non-structural proteins (By similarity).</text>
</comment>
<comment type="function">
    <molecule>Serine protease/helicase NS3</molecule>
    <text evidence="5 12">Displays three enzymatic activities: serine protease with a chymotrypsin-like fold, NTPase and RNA helicase (By similarity). NS3 serine protease, in association with NS4A, is responsible for the cleavages of NS3-NS4A, NS4A-NS4B, NS4B-NS5A and NS5A-NS5B (By similarity). The NS3/NS4A complex prevents phosphorylation of host IRF3, thus preventing the establishment of dsRNA induced antiviral state (By similarity). The NS3/NS4A complex induces host amino acid transporter component SLC3A2, thus contributing to HCV propagation (By similarity). NS3 RNA helicase binds to RNA and unwinds both dsDNA and dsRNA in the 3' to 5' direction, and likely resolves RNA complicated stable secondary structures in the template strand (By similarity). Binds a single ATP and catalyzes the unzipping of a single base pair of dsRNA (By similarity). Inhibits host antiviral proteins TBK1 and IRF3 thereby preventing the establishment of an antiviral state (By similarity). Cleaves host MAVS/CARDIF thereby preventing the establishment of an antiviral state (By similarity). Cleaves host TICAM1/TRIF, thereby disrupting TLR3 signaling and preventing the establishment of an antiviral state (By similarity).</text>
</comment>
<comment type="function">
    <molecule>Non-structural protein 4A</molecule>
    <text evidence="5 12">Peptide cofactor which forms a non-covalent complex with the N-terminal of NS3 serine protease (By similarity). The NS3/NS4A complex prevents phosphorylation of host IRF3, thus preventing the establishment of dsRNA induced antiviral state (By similarity). The NS3/NS4A complex induces host amino acid transporter component SLC3A2, thus contributing to HCV propagation (By similarity).</text>
</comment>
<comment type="function">
    <molecule>Non-structural protein 4B</molecule>
    <text evidence="5">Induces a specific membrane alteration that serves as a scaffold for the virus replication complex (By similarity). This membrane alteration gives rise to the so-called ER-derived membranous web that contains the replication complex (By similarity). NS4B self-interaction contributes to its function in membranous web formation (By similarity). Promotes host TRIF protein degradation in a CASP8-dependent manner thereby inhibiting host TLR3-mediated interferon signaling (By similarity). Disrupts the interaction between STING and TBK1 contributing to the inhibition of interferon signaling (By similarity).</text>
</comment>
<comment type="function">
    <molecule>Non-structural protein 5A</molecule>
    <text evidence="2 4 5 11 12">Phosphorylated protein that is indispensable for viral replication and assembly (By similarity). Both hypo- and hyperphosphorylated states are required for the viral life cycle (By similarity). The hyperphosphorylated form of NS5A is an inhibitor of viral replication (By similarity). Involved in RNA-binding and especially in binding to the viral genome (By similarity). Zinc is essential for RNA-binding (By similarity). Participates in the viral particle production as a result of its interaction with the mature viral core protein (By similarity). Its interaction with host VAPB may target the viral replication complex to vesicles (By similarity). Down-regulates viral IRES translation initiation (By similarity). Mediates interferon resistance, presumably by interacting with and inhibiting host EIF2AK2/PKR (By similarity). Prevents BIN1-induced apoptosis (By similarity). Acts as a transcriptional activator of some host genes important for viral replication when localized in the nucleus (By similarity). Via the interaction with host PACSIN2, modulates lipid droplet formation in order to promote virion assembly (By similarity). Modulates TNFRSF21/DR6 signaling pathway for viral propagation (By similarity).</text>
</comment>
<comment type="function">
    <molecule>RNA-directed RNA polymerase</molecule>
    <text evidence="5">RNA-dependent RNA polymerase that performs primer-template recognition and RNA synthesis during viral replication. Initiates RNA transcription/replication at a flavin adenine dinucleotide (FAD), resulting in a 5'- FAD cap on viral RNAs. In this way, recognition of viral 5' RNA by host pattern recognition receptors can be bypassed, thereby evading activation of antiviral pathways.</text>
</comment>
<comment type="catalytic activity">
    <molecule>Serine protease/helicase NS3</molecule>
    <reaction evidence="5">
        <text>Hydrolysis of four peptide bonds in the viral precursor polyprotein, commonly with Asp or Glu in the P6 position, Cys or Thr in P1 and Ser or Ala in P1'.</text>
        <dbReference type="EC" id="3.4.21.98"/>
    </reaction>
</comment>
<comment type="catalytic activity">
    <molecule>Serine protease/helicase NS3</molecule>
    <reaction evidence="5">
        <text>a ribonucleoside 5'-triphosphate + H2O = a ribonucleoside 5'-diphosphate + phosphate + H(+)</text>
        <dbReference type="Rhea" id="RHEA:23680"/>
        <dbReference type="ChEBI" id="CHEBI:15377"/>
        <dbReference type="ChEBI" id="CHEBI:15378"/>
        <dbReference type="ChEBI" id="CHEBI:43474"/>
        <dbReference type="ChEBI" id="CHEBI:57930"/>
        <dbReference type="ChEBI" id="CHEBI:61557"/>
        <dbReference type="EC" id="3.6.1.15"/>
    </reaction>
</comment>
<comment type="catalytic activity">
    <molecule>Serine protease/helicase NS3</molecule>
    <reaction evidence="5">
        <text>ATP + H2O = ADP + phosphate + H(+)</text>
        <dbReference type="Rhea" id="RHEA:13065"/>
        <dbReference type="ChEBI" id="CHEBI:15377"/>
        <dbReference type="ChEBI" id="CHEBI:15378"/>
        <dbReference type="ChEBI" id="CHEBI:30616"/>
        <dbReference type="ChEBI" id="CHEBI:43474"/>
        <dbReference type="ChEBI" id="CHEBI:456216"/>
        <dbReference type="EC" id="3.6.4.13"/>
    </reaction>
</comment>
<comment type="catalytic activity">
    <molecule>RNA-directed RNA polymerase</molecule>
    <reaction evidence="14">
        <text>RNA(n) + a ribonucleoside 5'-triphosphate = RNA(n+1) + diphosphate</text>
        <dbReference type="Rhea" id="RHEA:21248"/>
        <dbReference type="Rhea" id="RHEA-COMP:14527"/>
        <dbReference type="Rhea" id="RHEA-COMP:17342"/>
        <dbReference type="ChEBI" id="CHEBI:33019"/>
        <dbReference type="ChEBI" id="CHEBI:61557"/>
        <dbReference type="ChEBI" id="CHEBI:140395"/>
        <dbReference type="EC" id="2.7.7.48"/>
    </reaction>
</comment>
<comment type="cofactor">
    <molecule>Protease NS2</molecule>
    <cofactor evidence="3">
        <name>Zn(2+)</name>
        <dbReference type="ChEBI" id="CHEBI:29105"/>
    </cofactor>
    <text evidence="3">Activity of protease NS2 is dependent on zinc ions and completely inhibited by EDTA. This is probably due to the fact that NS2 protease activity needs NS3 N-terminus that binds a zinc atom (active region NS2-3).</text>
</comment>
<comment type="cofactor">
    <molecule>Serine protease/helicase NS3</molecule>
    <cofactor evidence="3">
        <name>Zn(2+)</name>
        <dbReference type="ChEBI" id="CHEBI:29105"/>
    </cofactor>
    <cofactor evidence="12">
        <name>Mg(2+)</name>
        <dbReference type="ChEBI" id="CHEBI:18420"/>
    </cofactor>
    <text evidence="3 12">Binds 1 zinc ion, which has a structural role (By similarity). The magnesium ion is essential for the helicase activity (By similarity).</text>
</comment>
<comment type="cofactor">
    <molecule>RNA-directed RNA polymerase</molecule>
    <cofactor evidence="3">
        <name>Mg(2+)</name>
        <dbReference type="ChEBI" id="CHEBI:18420"/>
    </cofactor>
    <text evidence="3">Binds 2 magnesium ion that constitute a dinuclear catalytic metal center.</text>
</comment>
<comment type="activity regulation">
    <molecule>Viroporin p7</molecule>
    <text evidence="2 5">Inhibited by the antiviral drug hexamethylene amiloride (By similarity). Inhibition by amantadine appears to be genotype-dependent (By similarity). Also inhibited by long-alkyl-chain iminosugar derivatives (By similarity).</text>
</comment>
<comment type="activity regulation">
    <molecule>RNA-directed RNA polymerase</molecule>
    <text evidence="5">Activity is up-regulated by PRK2/PKN2-mediated phosphorylation.</text>
</comment>
<comment type="subunit">
    <molecule>Mature core protein</molecule>
    <text evidence="2 4 5 6 8 9 11">Homooligomer (By similarity). Interacts with E1 (via C-terminus) (By similarity). Interacts with the non-structural protein 5A (By similarity). Interacts (via N-terminus) with host STAT1 (via SH2 domain); this interaction results in decreased STAT1 phosphorylation and ubiquitin-mediated proteasome-dependent STAT1 degradation, leading to decreased IFN-stimulated gene transcription (By similarity). Interacts with host STAT3; this interaction constitutively activates STAT3 (By similarity). Interacts with host LTBR receptor (By similarity). Interacts with host TNFRSF1A receptor and possibly induces apoptosis (By similarity). Interacts with host HNRPK (By similarity). Interacts with host YWHAE (By similarity). Interacts with host UBE3A/E6AP (By similarity). Interacts with host DDX3X (By similarity). Interacts with host APOA2 (By similarity). Interacts with host RXRA protein (By similarity). Interacts with host SP110 isoform 3/Sp110b; this interaction sequesters the transcriptional corepressor SP110 away from the nucleus (By similarity). Interacts with host CREB3 nuclear transcription protein; this interaction triggers cell transformation (By similarity). Interacts with host ACY3 (By similarity). Interacts with host C1QR1 (By similarity). Interacts with host RBM24; this interaction, which enhances the interaction of the mature core protein with 5'-UTR, may inhibit viral translation and favor replication (By similarity). Interacts with host EIF2AK2/PKR; this interaction induces the autophosphorylation of EIF2AK2 (By similarity). Part of the viral assembly initiation complex composed of NS2, E1, E2, NS3, NS4A, NS5A and the mature core protein (By similarity).</text>
</comment>
<comment type="subunit">
    <molecule>Envelope glycoprotein E1</molecule>
    <text evidence="5 11">Forms a heterodimer with envelope glycoprotein E2 (By similarity). Interacts with mature core protein (By similarity). Interacts with protease NS2 (By similarity). The heterodimer E1/E2 interacts with host CLDN1; this interaction plays a role in viral entry into host cell (By similarity). Interacts with host SPSB2 (via C-terminus) (By similarity). Part of the viral assembly initiation complex composed of NS2, E1, E2, NS3, NS4A, NS5A and the mature core protein (By similarity). Interacts with host NEURL3; this interaction prevents E1 binding to glycoprotein E2 (By similarity).</text>
</comment>
<comment type="subunit">
    <molecule>Envelope glycoprotein E2</molecule>
    <text evidence="5 11 12">Forms a heterodimer with envelope glycoprotein E1 (By similarity). Interacts with host CD81 and SCARB1 receptors; these interactions play a role in viral entry into host cell (By similarity). Interacts with host EIF2AK2/PKR; this interaction inhibits EIF2AK2 and probably allows the virus to evade the innate immune response (By similarity). Interacts with host CD209/DC-SIGN and CLEC4M/DC-SIGNR (By similarity). Interact with host SPCS1; this interaction is essential for viral particle assembly (By similarity). Interacts with protease NS2 (By similarity). The heterodimer E1/E2 interacts with host CLDN1; this interaction plays a role in viral entry into host cell (By similarity). Part of the viral assembly initiation complex composed of NS2, E1, E2, NS3, NS4A, NS5A and the mature core protein (By similarity). Interacts with host SLC3A2/4F2hc; the interaction may facilitate viral entry into host cell (By similarity). Interacts with human PLSCR1 (By similarity).</text>
</comment>
<comment type="subunit">
    <molecule>Viroporin p7</molecule>
    <text evidence="1 5 11">Homohexamer (By similarity). Homoheptamer (By similarity). Interacts with protease NS2 (By similarity).</text>
</comment>
<comment type="subunit">
    <molecule>Protease NS2</molecule>
    <text evidence="5 11">Homodimer (By similarity). Interacts with host SPCS1; this interaction is essential for viral particle assembly (By similarity). Interacts with envelope glycoprotein E1 (By similarity). Interacts with envelope glycoprotein E2 (By similarity). Interacts with viroporin p7 (By similarity). Interacts with serine protease/helicase NS3 (By similarity). Part of the replication complex composed of NS2, NS3, NS4A, NS4B, NS5A and the RNA-directed RNA polymerase embedded in an ER-derived membranous web (By similarity). Part of the viral assembly initiation complex composed of NS2, E1, E2, NS3, NS4A, NS5A and the mature core protein (By similarity).</text>
</comment>
<comment type="subunit">
    <molecule>Serine protease/helicase NS3</molecule>
    <text evidence="3 5 11 12">Interacts with protease NS2 (By similarity). Interacts with non-structural protein 4A; this interaction stabilizes the folding of NS3 serine protease (By similarity). NS3-NS4A interaction is essential for NS3 activation and allows membrane anchorage of the latter (By similarity). NS3/NS4A complex also prevents phosphorylation of host IRF3, thus preventing the establishment of dsRNA induced antiviral state (By similarity). Interacts with host MAVS; this interaction leads to the cleavage and inhibition of host MAVS (By similarity). Interacts with host TICAM1; this interaction leads to the cleavage and inhibition of host TICAM1 (By similarity). Interacts with host TANK-binding kinase/TBK1; this interaction results in the inhibition of the association between TBK1 and IRF3, which leads to the inhibition of IRF3 activation (By similarity). Interacts with host RBM24 (By similarity). Part of the replication complex composed of NS2, NS3, NS4A, NS4B, NS5A and the RNA-directed RNA polymerase embedded in an ER-derived membranous web (By similarity). Part of the viral assembly initiation complex composed of NS2, E1, E2, NS3, NS4A, NS5A and the mature core protein (By similarity).</text>
</comment>
<comment type="subunit">
    <molecule>Non-structural protein 4A</molecule>
    <text evidence="2 3 5 11">Interacts with NS3 serine protease; this interaction stabilizes the folding of NS3 serine protease (By similarity). NS3-NS4A interaction is essential for NS3 activation and allows membrane anchorage of the latter (By similarity). Interacts with non-structural protein 5A (via N-terminus) (By similarity). Part of the replication complex composed of NS2, NS3, NS4A, NS4B, NS5A and the RNA-directed RNA polymerase embedded in an ER-derived membranous web (By similarity). Part of the viral assembly initiation complex composed of NS2, E1, E2, NS3, NS4A, NS5A and the mature core protein (By similarity).</text>
</comment>
<comment type="subunit">
    <molecule>Non-structural protein 4B</molecule>
    <text evidence="5 11">Homomultimer (By similarity). Interacts with non-structural protein NS5A (By similarity). Interacts with host PLA2G4C; this interaction likely initiates the recruitment of replication complexes to lipid droplets (By similarity). Interacts with host STING; this interaction disrupts the interaction between STING and TBK1 thereby suppressing the interferon signaling (By similarity). Part of the replication complex composed of NS2, NS3, NS4A, NS4B, NS5A and the RNA-directed RNA polymerase embedded in an ER-derived membranous web (By similarity).</text>
</comment>
<comment type="subunit">
    <molecule>Non-structural protein 5A</molecule>
    <text evidence="2 3 4 5 11">Monomer. Homodimer; dimerization is required for RNA-binding (By similarity). Interacts with the mature core protein (By similarity). Interacts (via N-terminus) with non-structural protein 4A (By similarity). Interacts with non-structural protein 4B. Interacts (via region D2) with RNA-directed RNA polymerase (By similarity). Part of the viral assembly initiation complex composed of NS2, E1, E2, NS3, NS4A, NS5A and the mature core protein (By similarity). Part of the replication complex composed of NS2, NS3, NS4A, NS4B, NS5A and the RNA-directed RNA polymerase embedded in an ER-derived membranous web (By similarity). Interacts with host GRB2 (By similarity). Interacts with host BIN1 (By similarity). Interacts with host PIK3R1 (By similarity). Interacts with host SRCAP (By similarity). Interacts with host FKBP8 (By similarity). Interacts (via C-terminus) with host VAPB (via MSP domain). Interacts with host EIF2AK2/PKR; this interaction leads to disruption of EIF2AK2 dimerization by NS5A and probably allows the virus to evade the innate immune response. Interacts (via N-terminus) with host PACSIN2 (via N-terminus); this interaction attenuates protein kinase C alpha-mediated phosphorylation of PACSIN2 by disrupting the interaction between PACSIN2 and PRKCA (By similarity). Interacts (via N-terminus) with host SRC kinase (via SH2 domain) (By similarity). Interacts with most Src-family kinases (By similarity). Interacts with host IFI27 and SKP2; promotes the ubiquitin-mediated proteasomal degradation of NS5A (By similarity). Interacts with host GPS2 (By similarity). Interacts with host TNFRSF21; this interaction allows the modulation by the virus of JNK, p38 MAPK, STAT3, and Akt signaling pathways in a DR6-dependent manner. Interacts (via N-terminus) with host CIDEB (via N-terminus); this interaction seems to regulate the association of HCV particles with APOE (By similarity). Interacts with host CHKA/Choline Kinase-alpha; CHKA bridges host PI4KA and NS5A and potentiates NS5A-stimulated PI4KA activity, which then facilitates the targeting of the ternary complex to the ER for viral replication (By similarity). Interacts with host SPSB2 (via C-terminus); this interaction targets NS5A for ubiquitination and degradation (By similarity). Interacts with host RAB18; this interaction may promote the association of NS5A and other replicase components with lipid droplets (By similarity). Interacts (via region D2) with host PPIA/CYPA; the interaction stimulates RNA-binding ability of NS5A and is dependent on the peptidyl-prolyl cis-trans isomerase activity of PPIA/CYPA. Interacts with host TRIM14; this interaction induces the degradation of NS5A (By similarity).</text>
</comment>
<comment type="subunit">
    <molecule>RNA-directed RNA polymerase</molecule>
    <text evidence="5">Homooligomer (By similarity). Interacts with non-structural protein 5A (By similarity). Interacts with host VAPB (By similarity). Interacts with host PRK2/PKN2 (By similarity). Interacts with host HNRNPA1 and SEPT6; these interactions facilitate viral replication (By similarity). Part of the replication complex composed of NS2, NS3, NS4A, NS4B, NS5A and the RNA-directed RNA polymerase (By similarity).</text>
</comment>
<comment type="subcellular location">
    <molecule>Core protein precursor</molecule>
    <subcellularLocation>
        <location evidence="4">Host endoplasmic reticulum membrane</location>
        <topology evidence="13">Single-pass membrane protein</topology>
    </subcellularLocation>
    <subcellularLocation>
        <location evidence="4">Host mitochondrion membrane</location>
        <topology evidence="13">Single-pass type I membrane protein</topology>
    </subcellularLocation>
    <text>The C-terminal transmembrane domain of the core protein precursor contains an ER signal leading the nascent polyprotein to the ER membrane.</text>
</comment>
<comment type="subcellular location">
    <molecule>Mature core protein</molecule>
    <subcellularLocation>
        <location evidence="11">Virion</location>
    </subcellularLocation>
    <subcellularLocation>
        <location evidence="11">Host cytoplasm</location>
    </subcellularLocation>
    <subcellularLocation>
        <location evidence="2">Host nucleus</location>
    </subcellularLocation>
    <subcellularLocation>
        <location evidence="20">Host lipid droplet</location>
    </subcellularLocation>
    <text evidence="5">Only a minor proportion of core protein is present in the nucleus (By similarity). Probably present on the surface of lipid droplets (By similarity).</text>
</comment>
<comment type="subcellular location">
    <molecule>Envelope glycoprotein E1</molecule>
    <subcellularLocation>
        <location evidence="21">Virion membrane</location>
        <topology evidence="21">Single-pass type I membrane protein</topology>
    </subcellularLocation>
    <subcellularLocation>
        <location>Host endoplasmic reticulum membrane</location>
        <topology evidence="5">Single-pass type I membrane protein</topology>
    </subcellularLocation>
    <text evidence="5">The C-terminal transmembrane domain acts as a signal sequence and forms a hairpin structure before cleavage by host signal peptidase (By similarity). After cleavage, the membrane sequence is retained at the C-terminus of the protein, serving as ER membrane anchor (By similarity). A reorientation of the second hydrophobic stretch occurs after cleavage producing a single reoriented transmembrane domain (By similarity). These events explain the final topology of the protein (By similarity).</text>
</comment>
<comment type="subcellular location">
    <molecule>Envelope glycoprotein E2</molecule>
    <subcellularLocation>
        <location evidence="21">Virion membrane</location>
        <topology evidence="21">Single-pass type I membrane protein</topology>
    </subcellularLocation>
    <subcellularLocation>
        <location>Host endoplasmic reticulum membrane</location>
        <topology evidence="5">Single-pass type I membrane protein</topology>
    </subcellularLocation>
    <subcellularLocation>
        <location evidence="12">Host lipid droplet</location>
    </subcellularLocation>
    <text evidence="5">The C-terminal transmembrane domain acts as a signal sequence and forms a hairpin structure before cleavage by host signal peptidase (By similarity). After cleavage, the membrane sequence is retained at the C-terminus of the protein, serving as ER membrane anchor (By similarity). A reorientation of the second hydrophobic stretch occurs after cleavage producing a single reoriented transmembrane domain (By similarity). These events explain the final topology of the protein (By similarity).</text>
</comment>
<comment type="subcellular location">
    <molecule>Viroporin p7</molecule>
    <subcellularLocation>
        <location evidence="5">Host endoplasmic reticulum membrane</location>
        <topology evidence="5">Multi-pass membrane protein</topology>
    </subcellularLocation>
    <subcellularLocation>
        <location evidence="5">Host mitochondrion</location>
    </subcellularLocation>
    <subcellularLocation>
        <location evidence="5">Host cell membrane</location>
    </subcellularLocation>
    <text evidence="5">The C-terminus of p7 membrane domain acts as a signal sequence (By similarity). After cleavage by host signal peptidase, the membrane sequence is retained at the C-terminus of the protein, serving as ER membrane anchor (By similarity). ER retention of p7 is leaky and a small fraction reaches the plasma membrane (By similarity).</text>
</comment>
<comment type="subcellular location">
    <molecule>Protease NS2</molecule>
    <subcellularLocation>
        <location evidence="5">Host endoplasmic reticulum membrane</location>
        <topology evidence="5">Multi-pass membrane protein</topology>
    </subcellularLocation>
    <subcellularLocation>
        <location evidence="12">Host lipid droplet</location>
    </subcellularLocation>
    <text evidence="11">Probably present on the surface of lipid droplets.</text>
</comment>
<comment type="subcellular location">
    <molecule>Serine protease/helicase NS3</molecule>
    <subcellularLocation>
        <location evidence="21">Host endoplasmic reticulum membrane</location>
        <topology evidence="21">Peripheral membrane protein</topology>
    </subcellularLocation>
    <text evidence="21">NS3 is associated to the ER membrane through its binding to NS4A.</text>
</comment>
<comment type="subcellular location">
    <molecule>Non-structural protein 4A</molecule>
    <subcellularLocation>
        <location evidence="21">Host endoplasmic reticulum membrane</location>
        <topology evidence="21">Single-pass type I membrane protein</topology>
    </subcellularLocation>
    <text>Host membrane insertion occurs after processing by the NS3 protease.</text>
</comment>
<comment type="subcellular location">
    <molecule>Non-structural protein 4B</molecule>
    <subcellularLocation>
        <location evidence="5">Host endoplasmic reticulum membrane</location>
        <topology evidence="5">Multi-pass membrane protein</topology>
    </subcellularLocation>
    <text evidence="5">A reorientation of the N-terminus into the ER lumen occurs post-translationally.</text>
</comment>
<comment type="subcellular location">
    <molecule>Non-structural protein 5A</molecule>
    <subcellularLocation>
        <location evidence="5">Host endoplasmic reticulum membrane</location>
        <topology evidence="5">Peripheral membrane protein</topology>
    </subcellularLocation>
    <subcellularLocation>
        <location evidence="5">Host cytoplasm</location>
        <location evidence="5">Host perinuclear region</location>
    </subcellularLocation>
    <subcellularLocation>
        <location evidence="2">Host mitochondrion</location>
    </subcellularLocation>
    <subcellularLocation>
        <location evidence="5">Host cytoplasm</location>
    </subcellularLocation>
    <subcellularLocation>
        <location evidence="2">Host nucleus</location>
    </subcellularLocation>
    <subcellularLocation>
        <location evidence="12">Host lipid droplet</location>
    </subcellularLocation>
    <text evidence="2 5">Host membrane insertion occurs after processing by the NS3 protease (By similarity). Localizes at the surface of lipid droplets (By similarity).</text>
</comment>
<comment type="subcellular location">
    <molecule>RNA-directed RNA polymerase</molecule>
    <subcellularLocation>
        <location evidence="5">Host cytoplasm</location>
    </subcellularLocation>
    <subcellularLocation>
        <location>Host endoplasmic reticulum membrane</location>
        <topology evidence="5">Single-pass type IV membrane protein</topology>
    </subcellularLocation>
    <text evidence="5">Host membrane insertion occurs after processing by the NS3 protease.</text>
</comment>
<comment type="domain">
    <molecule>Envelope glycoprotein E1</molecule>
    <text evidence="5">The transmembrane regions of envelope E1 and E2 glycoproteins are involved in heterodimer formation, ER localization, and assembly of these proteins.</text>
</comment>
<comment type="domain">
    <molecule>Envelope glycoprotein E2</molecule>
    <text evidence="3 5">The transmembrane regions of envelope E1 and E2 glycoproteins are involved in heterodimer formation, ER localization, and assembly of these proteins (By similarity). Envelope E2 glycoprotein contain two highly variable regions called hypervariable region 1 and 2 (HVR1 and HVR2) (By similarity). E2 also contain two segments involved in CD81-binding (By similarity). HVR1 is implicated in the SCARB1-mediated cell entry and probably acts as a regulator of the association of particles with lipids (By similarity).</text>
</comment>
<comment type="domain">
    <molecule>Protease NS2</molecule>
    <text evidence="3">The N-terminus of NS3 is required for the catalytic activity of protease NS2 (By similarity). The minimal catalytic region includes the C-terminus of NS2 and the N-terminus NS3 protease domain (active region NS2-3) (By similarity).</text>
</comment>
<comment type="domain">
    <molecule>Serine protease/helicase NS3</molecule>
    <text evidence="2 5">The N-terminal one-third contains the protease activity (By similarity). This region contains a zinc atom that does not belong to the active site, but may play a structural rather than a catalytic role (By similarity). This region is essential for the activity of protease NS2, maybe by contributing to the folding of the latter (By similarity). The NTPase/helicase activity is located in the twothirds C-terminus of NS3, this domain contains the NTPase and RNA-binding regions (By similarity).</text>
</comment>
<comment type="domain">
    <molecule>Non-structural protein 4B</molecule>
    <text evidence="11">Contains a glycine zipper region that critically contributes to the biogenesis of functional ER-derived replication organelles.</text>
</comment>
<comment type="domain">
    <molecule>Non-structural protein 5A</molecule>
    <text evidence="2 5">The N-terminus of NS5A acts as membrane anchor (By similarity). The central part of NS5A contains a variable region called interferon sensitivity determining region (ISDR) and seems to be intrinsically disordered and interacts with NS5B and host EIF2AK2 (By similarity). The C-terminus of NS5A contains a variable region called variable region 3 (V3) (By similarity). ISDR and V3 may be involved in sensitivity and/or resistance to IFN-alpha therapy (By similarity). The C-terminus contains a nuclear localization signal (By similarity). The SH3-binding domain is involved in the interaction with host BIN1, GRB2 and Src-family kinases (By similarity).</text>
</comment>
<comment type="PTM">
    <molecule>Genome polyprotein</molecule>
    <text evidence="4 5">Specific enzymatic cleavages in vivo yield mature proteins (By similarity). The structural proteins, core, E1, E2 and p7 are produced by proteolytic processing by host signal peptidases (By similarity). The core protein precursor is synthesized as a 23 kDa, which is retained in the ER membrane through the hydrophobic signal peptide (By similarity). Cleavage by the signal peptidase releases the 21 kDa mature core protein (By similarity). The cleavage of the core protein precursor occurs between aminoacids 176 and 188 but the exact cleavage site is not known (By similarity). Some degraded forms of the core protein appear as well during the course of infection (By similarity). The other proteins (p7, NS2, NS3, NS4A, NS4B, NS5A and NS5B) are cleaved by the viral proteases (By similarity). Autoprocessing between NS2 and NS3 is mediated by the NS2 cysteine protease catalytic domain and regulated by the NS3 N-terminal domain (By similarity).</text>
</comment>
<comment type="PTM">
    <molecule>Mature core protein</molecule>
    <text evidence="7">Phosphorylated by host PKC and PKA.</text>
</comment>
<comment type="PTM">
    <molecule>Mature core protein</molecule>
    <text evidence="8">Ubiquitinated; mediated by UBE3A and leading to core protein subsequent proteasomal degradation.</text>
</comment>
<comment type="PTM">
    <molecule>Envelope glycoprotein E1</molecule>
    <text evidence="5">Highly N-glycosylated.</text>
</comment>
<comment type="PTM">
    <molecule>Envelope glycoprotein E2</molecule>
    <text evidence="5">Highly N-glycosylated.</text>
</comment>
<comment type="PTM">
    <molecule>Protease NS2</molecule>
    <text evidence="5">Palmitoylation is required for NS2/3 autoprocessing and E2 recruitment to membranes.</text>
</comment>
<comment type="PTM">
    <molecule>Non-structural protein 4B</molecule>
    <text evidence="5">Palmitoylated. This modification may play a role in its polymerization or in protein-protein interactions.</text>
</comment>
<comment type="PTM">
    <molecule>Non-structural protein 5A</molecule>
    <text evidence="2 4">Phosphorylated on serines in a basal form termed p56 (By similarity). p58 is a hyperphosphorylated form of p56 (By similarity). p56 and p58 coexist in the cell in roughly equivalent amounts (By similarity). Hyperphosphorylation is dependent on the presence of NS4A (By similarity). Host CSNK1A1/CKI-alpha or RPS6KB1 kinases may be responsible for NS5A phosphorylation (By similarity).</text>
</comment>
<comment type="PTM">
    <molecule>Non-structural protein 5A</molecule>
    <text evidence="11">Tyrosine phosphorylation is essential for the interaction with host SRC.</text>
</comment>
<comment type="PTM">
    <molecule>Non-structural protein 5A</molecule>
    <text evidence="5">Ubiquitinated (By similarity). Ubiquitination, most probably at Lys-2350, mediated by host IFI27 and SKP2 leads to proteasomal degradation, restricting viral infection (By similarity). Ubiquitination by host TRIM22 leads to interruption of viral replication (By similarity).</text>
</comment>
<comment type="PTM">
    <molecule>RNA-directed RNA polymerase</molecule>
    <text evidence="2">The N-terminus is phosphorylated by host PRK2/PKN2.</text>
</comment>
<comment type="miscellaneous">
    <text evidence="21">Viral particle assembly takes place at the surface of ER-derived membranes in close proximity to lipid droplets. NS2 associates with E1/E2 glycoproteins, NS3 and NS5A, which interacts with the viral RNA and core protein to promote genome encapsidation. The nucleocapsid buds at the ER membrane where E1/E2 glycoproteins are anchored and afterward associate with nascent lipid droplet to acquire APOE and APOC. Secretion of viral particles is probably regulated by viroporin p7.</text>
</comment>
<comment type="miscellaneous">
    <molecule>Non-structural protein 5A</molecule>
    <text evidence="21">Cell culture adaptation of the virus leads to mutations in NS5A, reducing its inhibitory effect on replication.</text>
</comment>
<comment type="miscellaneous">
    <molecule>Mature core protein</molecule>
    <text evidence="2">Exerts viral interference on hepatitis B virus when HCV and HBV coinfect the same cell, by suppressing HBV gene expression, RNA encapsidation and budding.</text>
</comment>
<comment type="similarity">
    <text evidence="21">Belongs to the hepacivirus polyprotein family.</text>
</comment>
<comment type="caution">
    <text evidence="21">The core gene probably also codes for alternative reading frame proteins (ARFPs). Many functions depicted for the core protein might belong to the ARFPs.</text>
</comment>
<feature type="initiator methionine" description="Removed; by host" evidence="4">
    <location>
        <position position="1"/>
    </location>
</feature>
<feature type="chain" id="PRO_0000450922" description="Genome polyprotein">
    <location>
        <begin position="2"/>
        <end position="3021"/>
    </location>
</feature>
<feature type="chain" id="PRO_0000045652" description="Core protein precursor">
    <location>
        <begin position="2"/>
        <end position="191"/>
    </location>
</feature>
<feature type="chain" id="PRO_0000045653" description="Mature core protein">
    <location>
        <begin position="2"/>
        <end position="177"/>
    </location>
</feature>
<feature type="propeptide" id="PRO_0000045654" description="ER anchor for the core protein, removed in mature form by host signal peptidase">
    <location>
        <begin position="178"/>
        <end position="191"/>
    </location>
</feature>
<feature type="chain" id="PRO_0000045655" description="Envelope glycoprotein E1">
    <location>
        <begin position="192"/>
        <end position="383"/>
    </location>
</feature>
<feature type="chain" id="PRO_0000045656" description="Envelope glycoprotein E2">
    <location>
        <begin position="384"/>
        <end position="752"/>
    </location>
</feature>
<feature type="chain" id="PRO_0000045657" description="Viroporin p7">
    <location>
        <begin position="753"/>
        <end position="815"/>
    </location>
</feature>
<feature type="chain" id="PRO_0000045658" description="Protease NS2" evidence="17">
    <location>
        <begin position="816"/>
        <end position="1032"/>
    </location>
</feature>
<feature type="chain" id="PRO_0000045659" description="Serine protease/helicase NS3">
    <location>
        <begin position="1033"/>
        <end position="1663"/>
    </location>
</feature>
<feature type="chain" id="PRO_0000045660" description="Non-structural protein 4A">
    <location>
        <begin position="1664"/>
        <end position="1717"/>
    </location>
</feature>
<feature type="chain" id="PRO_0000045661" description="Non-structural protein 4B">
    <location>
        <begin position="1718"/>
        <end position="1978"/>
    </location>
</feature>
<feature type="chain" id="PRO_0000045662" description="Non-structural protein 5A">
    <location>
        <begin position="1979"/>
        <end position="2430"/>
    </location>
</feature>
<feature type="chain" id="PRO_0000045663" description="RNA-directed RNA polymerase">
    <location>
        <begin position="2431"/>
        <end position="3021"/>
    </location>
</feature>
<feature type="topological domain" description="Cytoplasmic" evidence="13">
    <location>
        <begin position="2"/>
        <end position="168"/>
    </location>
</feature>
<feature type="transmembrane region" description="Helical" evidence="13">
    <location>
        <begin position="169"/>
        <end position="189"/>
    </location>
</feature>
<feature type="topological domain" description="Lumenal" evidence="5">
    <location>
        <begin position="190"/>
        <end position="358"/>
    </location>
</feature>
<feature type="transmembrane region" description="Helical" evidence="5">
    <location>
        <begin position="359"/>
        <end position="379"/>
    </location>
</feature>
<feature type="topological domain" description="Lumenal" evidence="5">
    <location>
        <begin position="380"/>
        <end position="731"/>
    </location>
</feature>
<feature type="transmembrane region" description="Helical" evidence="5">
    <location>
        <begin position="732"/>
        <end position="752"/>
    </location>
</feature>
<feature type="topological domain" description="Lumenal" evidence="5">
    <location>
        <begin position="753"/>
        <end position="763"/>
    </location>
</feature>
<feature type="transmembrane region" description="Helical" evidence="5">
    <location>
        <begin position="764"/>
        <end position="784"/>
    </location>
</feature>
<feature type="topological domain" description="Cytoplasmic" evidence="5">
    <location>
        <begin position="785"/>
        <end position="787"/>
    </location>
</feature>
<feature type="transmembrane region" description="Helical" evidence="5">
    <location>
        <begin position="788"/>
        <end position="809"/>
    </location>
</feature>
<feature type="topological domain" description="Lumenal" evidence="5">
    <location>
        <begin position="810"/>
        <end position="819"/>
    </location>
</feature>
<feature type="transmembrane region" description="Helical" evidence="12">
    <location>
        <begin position="820"/>
        <end position="840"/>
    </location>
</feature>
<feature type="topological domain" description="Cytoplasmic" evidence="12">
    <location>
        <begin position="841"/>
        <end position="844"/>
    </location>
</feature>
<feature type="transmembrane region" description="Helical" evidence="12">
    <location>
        <begin position="845"/>
        <end position="864"/>
    </location>
</feature>
<feature type="topological domain" description="Lumenal" evidence="12">
    <location>
        <begin position="865"/>
        <end position="887"/>
    </location>
</feature>
<feature type="transmembrane region" description="Helical" evidence="12">
    <location>
        <begin position="888"/>
        <end position="908"/>
    </location>
</feature>
<feature type="topological domain" description="Cytoplasmic" evidence="12">
    <location>
        <begin position="909"/>
        <end position="1663"/>
    </location>
</feature>
<feature type="transmembrane region" description="Helical" evidence="13">
    <location>
        <begin position="1664"/>
        <end position="1684"/>
    </location>
</feature>
<feature type="topological domain" description="Cytoplasmic" evidence="13">
    <location>
        <begin position="1685"/>
        <end position="1811"/>
    </location>
</feature>
<feature type="transmembrane region" description="Helical" evidence="13">
    <location>
        <begin position="1812"/>
        <end position="1830"/>
    </location>
</feature>
<feature type="topological domain" description="Lumenal" evidence="5">
    <location>
        <begin position="1831"/>
        <end position="1834"/>
    </location>
</feature>
<feature type="transmembrane region" description="Helical" evidence="13">
    <location>
        <begin position="1835"/>
        <end position="1855"/>
    </location>
</feature>
<feature type="topological domain" description="Cytoplasmic" evidence="13">
    <location>
        <position position="1856"/>
    </location>
</feature>
<feature type="transmembrane region" description="Helical" evidence="13">
    <location>
        <begin position="1857"/>
        <end position="1877"/>
    </location>
</feature>
<feature type="topological domain" description="Lumenal" evidence="13">
    <location>
        <begin position="1878"/>
        <end position="1887"/>
    </location>
</feature>
<feature type="transmembrane region" description="Helical" evidence="13">
    <location>
        <begin position="1888"/>
        <end position="1908"/>
    </location>
</feature>
<feature type="topological domain" description="Cytoplasmic" evidence="13">
    <location>
        <begin position="1909"/>
        <end position="1978"/>
    </location>
</feature>
<feature type="intramembrane region" evidence="5">
    <location>
        <begin position="1979"/>
        <end position="2008"/>
    </location>
</feature>
<feature type="topological domain" description="Cytoplasmic" evidence="5">
    <location>
        <begin position="2009"/>
        <end position="3000"/>
    </location>
</feature>
<feature type="transmembrane region" description="Helical" evidence="5">
    <location>
        <begin position="3001"/>
        <end position="3021"/>
    </location>
</feature>
<feature type="domain" description="Peptidase C18" evidence="17">
    <location>
        <begin position="905"/>
        <end position="1032"/>
    </location>
</feature>
<feature type="domain" description="Peptidase S29" evidence="18">
    <location>
        <begin position="1033"/>
        <end position="1214"/>
    </location>
</feature>
<feature type="domain" description="Helicase ATP-binding" evidence="15">
    <location>
        <begin position="1223"/>
        <end position="1375"/>
    </location>
</feature>
<feature type="domain" description="Helicase C-terminal" evidence="16">
    <location>
        <begin position="1382"/>
        <end position="1544"/>
    </location>
</feature>
<feature type="domain" description="RdRp catalytic" evidence="14">
    <location>
        <begin position="2644"/>
        <end position="2762"/>
    </location>
</feature>
<feature type="region of interest" description="Disordered" evidence="5">
    <location>
        <begin position="2"/>
        <end position="75"/>
    </location>
</feature>
<feature type="region of interest" description="Interaction with DDX3X" evidence="9">
    <location>
        <begin position="2"/>
        <end position="59"/>
    </location>
</feature>
<feature type="region of interest" description="Interaction with EIF2AK2/PKR" evidence="2">
    <location>
        <begin position="2"/>
        <end position="58"/>
    </location>
</feature>
<feature type="region of interest" description="Interaction with STAT1" evidence="2">
    <location>
        <begin position="2"/>
        <end position="23"/>
    </location>
</feature>
<feature type="region of interest" description="Important for endoplasmic reticulum and mitochondrial localization" evidence="2">
    <location>
        <begin position="112"/>
        <end position="152"/>
    </location>
</feature>
<feature type="region of interest" description="Interaction with APOA2" evidence="6">
    <location>
        <begin position="122"/>
        <end position="173"/>
    </location>
</feature>
<feature type="region of interest" description="Important for lipid droplets localization" evidence="5">
    <location>
        <begin position="164"/>
        <end position="167"/>
    </location>
</feature>
<feature type="region of interest" description="Important for fusion" evidence="5">
    <location>
        <begin position="265"/>
        <end position="296"/>
    </location>
</feature>
<feature type="region of interest" description="HVR1" evidence="5">
    <location>
        <begin position="385"/>
        <end position="412"/>
    </location>
</feature>
<feature type="region of interest" description="HVR2" evidence="5">
    <location>
        <begin position="474"/>
        <end position="479"/>
    </location>
</feature>
<feature type="region of interest" description="CD81-binding 1" evidence="3">
    <location>
        <begin position="481"/>
        <end position="494"/>
    </location>
</feature>
<feature type="region of interest" description="CD81-binding 2" evidence="3">
    <location>
        <begin position="545"/>
        <end position="552"/>
    </location>
</feature>
<feature type="region of interest" description="PKR/eIF2-alpha phosphorylation homology domain (PePHD)">
    <location>
        <begin position="666"/>
        <end position="677"/>
    </location>
</feature>
<feature type="region of interest" description="Protease NS2-3" evidence="3">
    <location>
        <begin position="910"/>
        <end position="1212"/>
    </location>
</feature>
<feature type="region of interest" description="Interaction with host SCPS1" evidence="11">
    <location>
        <begin position="935"/>
        <end position="955"/>
    </location>
</feature>
<feature type="region of interest" description="RNA-binding" evidence="3">
    <location>
        <begin position="1492"/>
        <end position="1504"/>
    </location>
</feature>
<feature type="region of interest" description="NS3-binding" evidence="5">
    <location>
        <begin position="1685"/>
        <end position="1696"/>
    </location>
</feature>
<feature type="region of interest" description="Transcriptional activation" evidence="13">
    <location>
        <begin position="2126"/>
        <end position="2338"/>
    </location>
</feature>
<feature type="region of interest" description="FKBP8-binding" evidence="2">
    <location>
        <begin position="2126"/>
        <end position="2214"/>
    </location>
</feature>
<feature type="region of interest" description="Interaction with non-structural protein 4A" evidence="2">
    <location>
        <begin position="2141"/>
        <end position="2145"/>
    </location>
</feature>
<feature type="region of interest" description="Disordered" evidence="19">
    <location>
        <begin position="2193"/>
        <end position="2215"/>
    </location>
</feature>
<feature type="region of interest" description="Interaction with host SKP2" evidence="5">
    <location>
        <begin position="2195"/>
        <end position="2448"/>
    </location>
</feature>
<feature type="region of interest" description="Interaction with EIF2AK2/PKR" evidence="3">
    <location>
        <begin position="2216"/>
        <end position="2281"/>
    </location>
</feature>
<feature type="region of interest" description="ISDR" evidence="2">
    <location>
        <begin position="2216"/>
        <end position="2255"/>
    </location>
</feature>
<feature type="region of interest" description="NS4B-binding" evidence="13">
    <location>
        <begin position="2255"/>
        <end position="2312"/>
    </location>
</feature>
<feature type="region of interest" description="V3">
    <location>
        <begin position="2305"/>
        <end position="2387"/>
    </location>
</feature>
<feature type="region of interest" description="Disordered" evidence="19">
    <location>
        <begin position="2356"/>
        <end position="2417"/>
    </location>
</feature>
<feature type="short sequence motif" description="Nuclear localization signal" evidence="11">
    <location>
        <begin position="5"/>
        <end position="13"/>
    </location>
</feature>
<feature type="short sequence motif" description="Nuclear localization signal" evidence="11">
    <location>
        <begin position="38"/>
        <end position="43"/>
    </location>
</feature>
<feature type="short sequence motif" description="Nuclear localization signal" evidence="11">
    <location>
        <begin position="58"/>
        <end position="64"/>
    </location>
</feature>
<feature type="short sequence motif" description="Nuclear localization signal" evidence="11">
    <location>
        <begin position="66"/>
        <end position="71"/>
    </location>
</feature>
<feature type="short sequence motif" description="DECH box" evidence="11">
    <location>
        <begin position="1322"/>
        <end position="1325"/>
    </location>
</feature>
<feature type="short sequence motif" description="SH3-binding" evidence="13">
    <location>
        <begin position="2328"/>
        <end position="2331"/>
    </location>
</feature>
<feature type="short sequence motif" description="Nuclear localization signal" evidence="2">
    <location>
        <begin position="2333"/>
        <end position="2341"/>
    </location>
</feature>
<feature type="compositionally biased region" description="Basic residues" evidence="19">
    <location>
        <begin position="7"/>
        <end position="16"/>
    </location>
</feature>
<feature type="compositionally biased region" description="Basic residues" evidence="19">
    <location>
        <begin position="58"/>
        <end position="68"/>
    </location>
</feature>
<feature type="compositionally biased region" description="Low complexity" evidence="19">
    <location>
        <begin position="2200"/>
        <end position="2215"/>
    </location>
</feature>
<feature type="compositionally biased region" description="Low complexity" evidence="19">
    <location>
        <begin position="2359"/>
        <end position="2381"/>
    </location>
</feature>
<feature type="compositionally biased region" description="Low complexity" evidence="19">
    <location>
        <begin position="2388"/>
        <end position="2401"/>
    </location>
</feature>
<feature type="active site" description="For protease NS2 activity; shared with dimeric partner" evidence="17">
    <location>
        <position position="958"/>
    </location>
</feature>
<feature type="active site" description="For protease NS2 activity; shared with dimeric partner" evidence="17">
    <location>
        <position position="978"/>
    </location>
</feature>
<feature type="active site" description="For protease NS2 activity; shared with dimeric partner" evidence="17">
    <location>
        <position position="999"/>
    </location>
</feature>
<feature type="active site" description="Charge relay system; for serine protease NS3 activity" evidence="18">
    <location>
        <position position="1089"/>
    </location>
</feature>
<feature type="active site" description="Charge relay system; for serine protease NS3 activity" evidence="18">
    <location>
        <position position="1113"/>
    </location>
</feature>
<feature type="active site" description="Charge relay system; for serine protease NS3 activity" evidence="18">
    <location>
        <position position="1171"/>
    </location>
</feature>
<feature type="binding site" evidence="18">
    <location>
        <position position="1129"/>
    </location>
    <ligand>
        <name>Zn(2+)</name>
        <dbReference type="ChEBI" id="CHEBI:29105"/>
        <label>1</label>
        <note>structural; for NS3 protease activity and NS2/3 auto-cleavage activity</note>
    </ligand>
</feature>
<feature type="binding site" evidence="18">
    <location>
        <position position="1131"/>
    </location>
    <ligand>
        <name>Zn(2+)</name>
        <dbReference type="ChEBI" id="CHEBI:29105"/>
        <label>1</label>
        <note>structural; for NS3 protease activity and NS2/3 auto-cleavage activity</note>
    </ligand>
</feature>
<feature type="binding site" evidence="18">
    <location>
        <position position="1177"/>
    </location>
    <ligand>
        <name>Zn(2+)</name>
        <dbReference type="ChEBI" id="CHEBI:29105"/>
        <label>1</label>
        <note>structural; for NS3 protease activity and NS2/3 auto-cleavage activity</note>
    </ligand>
</feature>
<feature type="binding site" evidence="18">
    <location>
        <position position="1181"/>
    </location>
    <ligand>
        <name>Zn(2+)</name>
        <dbReference type="ChEBI" id="CHEBI:29105"/>
        <label>1</label>
        <note>structural; for NS3 protease activity and NS2/3 auto-cleavage activity</note>
    </ligand>
</feature>
<feature type="binding site" evidence="15">
    <location>
        <begin position="1236"/>
        <end position="1243"/>
    </location>
    <ligand>
        <name>ATP</name>
        <dbReference type="ChEBI" id="CHEBI:30616"/>
    </ligand>
</feature>
<feature type="binding site" evidence="12">
    <location>
        <position position="1243"/>
    </location>
    <ligand>
        <name>Mg(2+)</name>
        <dbReference type="ChEBI" id="CHEBI:18420"/>
        <label>1</label>
        <note>catalytic; for NS3 helicase activity</note>
    </ligand>
</feature>
<feature type="binding site" evidence="12">
    <location>
        <position position="1323"/>
    </location>
    <ligand>
        <name>Mg(2+)</name>
        <dbReference type="ChEBI" id="CHEBI:18420"/>
        <label>1</label>
        <note>catalytic; for NS3 helicase activity</note>
    </ligand>
</feature>
<feature type="binding site" evidence="12">
    <location>
        <position position="2017"/>
    </location>
    <ligand>
        <name>Zn(2+)</name>
        <dbReference type="ChEBI" id="CHEBI:29105"/>
        <label>2</label>
        <note>structural</note>
    </ligand>
</feature>
<feature type="binding site" evidence="12">
    <location>
        <position position="2035"/>
    </location>
    <ligand>
        <name>Zn(2+)</name>
        <dbReference type="ChEBI" id="CHEBI:29105"/>
        <label>2</label>
        <note>structural</note>
    </ligand>
</feature>
<feature type="binding site" evidence="12">
    <location>
        <position position="2037"/>
    </location>
    <ligand>
        <name>Zn(2+)</name>
        <dbReference type="ChEBI" id="CHEBI:29105"/>
        <label>2</label>
        <note>structural</note>
    </ligand>
</feature>
<feature type="binding site" evidence="12">
    <location>
        <position position="2058"/>
    </location>
    <ligand>
        <name>Zn(2+)</name>
        <dbReference type="ChEBI" id="CHEBI:29105"/>
        <label>2</label>
        <note>structural</note>
    </ligand>
</feature>
<feature type="binding site" evidence="3">
    <location>
        <position position="2650"/>
    </location>
    <ligand>
        <name>Mg(2+)</name>
        <dbReference type="ChEBI" id="CHEBI:18420"/>
        <label>2</label>
        <note>catalytic; for RNA-directed RNA polymerase activity</note>
    </ligand>
</feature>
<feature type="binding site" evidence="3">
    <location>
        <position position="2748"/>
    </location>
    <ligand>
        <name>Mg(2+)</name>
        <dbReference type="ChEBI" id="CHEBI:18420"/>
        <label>2</label>
        <note>catalytic; for RNA-directed RNA polymerase activity</note>
    </ligand>
</feature>
<feature type="binding site" evidence="3">
    <location>
        <position position="2749"/>
    </location>
    <ligand>
        <name>Mg(2+)</name>
        <dbReference type="ChEBI" id="CHEBI:18420"/>
        <label>2</label>
        <note>catalytic; for RNA-directed RNA polymerase activity</note>
    </ligand>
</feature>
<feature type="site" description="Cleavage; by host signal peptide peptidase" evidence="2">
    <location>
        <begin position="177"/>
        <end position="178"/>
    </location>
</feature>
<feature type="site" description="Cleavage; by host signal peptidase" evidence="2">
    <location>
        <begin position="191"/>
        <end position="192"/>
    </location>
</feature>
<feature type="site" description="Cleavage; by host signal peptidase" evidence="2">
    <location>
        <begin position="383"/>
        <end position="384"/>
    </location>
</feature>
<feature type="site" description="Cleavage; by host signal peptidase">
    <location>
        <begin position="752"/>
        <end position="753"/>
    </location>
</feature>
<feature type="site" description="Cleavage; by host signal peptidase">
    <location>
        <begin position="815"/>
        <end position="816"/>
    </location>
</feature>
<feature type="site" description="Cleavage; by protease NS2" evidence="17">
    <location>
        <begin position="1032"/>
        <end position="1033"/>
    </location>
</feature>
<feature type="site" description="Cleavage; by serine protease NS3" evidence="5">
    <location>
        <begin position="1663"/>
        <end position="1664"/>
    </location>
</feature>
<feature type="site" description="Cleavage; by serine protease NS3" evidence="5">
    <location>
        <begin position="1717"/>
        <end position="1718"/>
    </location>
</feature>
<feature type="site" description="Cleavage; by serine protease NS3" evidence="5">
    <location>
        <begin position="1978"/>
        <end position="1979"/>
    </location>
</feature>
<feature type="site" description="Cleavage; by serine protease NS3" evidence="5">
    <location>
        <begin position="2430"/>
        <end position="2431"/>
    </location>
</feature>
<feature type="modified residue" description="N-acetylserine; by host" evidence="10">
    <location>
        <position position="2"/>
    </location>
</feature>
<feature type="modified residue" description="Phosphoserine; by host" evidence="7">
    <location>
        <position position="53"/>
    </location>
</feature>
<feature type="modified residue" description="Phosphoserine; by host" evidence="7">
    <location>
        <position position="99"/>
    </location>
</feature>
<feature type="modified residue" description="Phosphoserine; by host PKA" evidence="7">
    <location>
        <position position="116"/>
    </location>
</feature>
<feature type="modified residue" description="Phosphoserine; by host" evidence="12">
    <location>
        <position position="2200"/>
    </location>
</feature>
<feature type="modified residue" description="Phosphoserine; by host" evidence="12">
    <location>
        <position position="2203"/>
    </location>
</feature>
<feature type="modified residue" description="Phosphoserine; by host" evidence="12">
    <location>
        <position position="2207"/>
    </location>
</feature>
<feature type="modified residue" description="Phosphoserine; by host" evidence="12">
    <location>
        <position position="2210"/>
    </location>
</feature>
<feature type="modified residue" description="Phosphoserine; by host" evidence="11">
    <location>
        <position position="2213"/>
    </location>
</feature>
<feature type="modified residue" description="Phosphoserine; by host" evidence="11">
    <location>
        <position position="2216"/>
    </location>
</feature>
<feature type="modified residue" description="Phosphoserine; by host" evidence="2">
    <location>
        <position position="2459"/>
    </location>
</feature>
<feature type="modified residue" description="Phosphoserine; by host" evidence="2">
    <location>
        <position position="2472"/>
    </location>
</feature>
<feature type="lipid moiety-binding region" description="S-palmitoyl cysteine; by host" evidence="5">
    <location>
        <position position="928"/>
    </location>
</feature>
<feature type="lipid moiety-binding region" description="S-palmitoyl cysteine; by host" evidence="5">
    <location>
        <position position="1978"/>
    </location>
</feature>
<feature type="glycosylation site" description="N-linked (GlcNAc...) asparagine; by host" evidence="5">
    <location>
        <position position="196"/>
    </location>
</feature>
<feature type="glycosylation site" description="N-linked (GlcNAc...) asparagine; by host" evidence="5">
    <location>
        <position position="209"/>
    </location>
</feature>
<feature type="glycosylation site" description="N-linked (GlcNAc...) asparagine; by host" evidence="5">
    <location>
        <position position="234"/>
    </location>
</feature>
<feature type="glycosylation site" description="N-linked (GlcNAc...) asparagine; by host" evidence="5">
    <location>
        <position position="305"/>
    </location>
</feature>
<feature type="glycosylation site" description="N-linked (GlcNAc...) (high mannose) asparagine; by host" evidence="5">
    <location>
        <position position="417"/>
    </location>
</feature>
<feature type="glycosylation site" description="N-linked (GlcNAc...) (high mannose) asparagine; by host" evidence="5">
    <location>
        <position position="423"/>
    </location>
</feature>
<feature type="glycosylation site" description="N-linked (GlcNAc...) (high mannose) asparagine; by host" evidence="5">
    <location>
        <position position="430"/>
    </location>
</feature>
<feature type="glycosylation site" description="N-linked (GlcNAc...) asparagine; by host" evidence="13">
    <location>
        <position position="448"/>
    </location>
</feature>
<feature type="glycosylation site" description="N-linked (GlcNAc...) asparagine; by host" evidence="13">
    <location>
        <position position="476"/>
    </location>
</feature>
<feature type="glycosylation site" description="N-linked (GlcNAc...) asparagine; by host" evidence="13">
    <location>
        <position position="533"/>
    </location>
</feature>
<feature type="glycosylation site" description="N-linked (GlcNAc...) asparagine; by host" evidence="13">
    <location>
        <position position="557"/>
    </location>
</feature>
<feature type="glycosylation site" description="N-linked (GlcNAc...) asparagine; by host" evidence="13">
    <location>
        <position position="578"/>
    </location>
</feature>
<feature type="glycosylation site" description="N-linked (GlcNAc...) (high mannose) asparagine; by host" evidence="5">
    <location>
        <position position="651"/>
    </location>
</feature>
<feature type="disulfide bond" evidence="5">
    <location>
        <begin position="429"/>
        <end position="553"/>
    </location>
</feature>
<feature type="disulfide bond" evidence="5">
    <location>
        <begin position="452"/>
        <end position="459"/>
    </location>
</feature>
<feature type="disulfide bond" evidence="5">
    <location>
        <begin position="487"/>
        <end position="495"/>
    </location>
</feature>
<feature type="disulfide bond" evidence="5">
    <location>
        <begin position="504"/>
        <end position="509"/>
    </location>
</feature>
<feature type="disulfide bond" evidence="5">
    <location>
        <begin position="565"/>
        <end position="570"/>
    </location>
</feature>
<feature type="disulfide bond" evidence="5">
    <location>
        <begin position="587"/>
        <end position="591"/>
    </location>
</feature>
<feature type="disulfide bond" evidence="5">
    <location>
        <begin position="603"/>
        <end position="626"/>
    </location>
</feature>
<feature type="disulfide bond" evidence="5">
    <location>
        <begin position="613"/>
        <end position="650"/>
    </location>
</feature>
<feature type="disulfide bond" evidence="5">
    <location>
        <begin position="658"/>
        <end position="683"/>
    </location>
</feature>
<feature type="cross-link" description="Glycyl lysine isopeptide (Lys-Gly) (interchain with G-Cter in ubiquitin)" evidence="5">
    <location>
        <position position="2356"/>
    </location>
</feature>
<feature type="mutagenesis site" description="Reduced FAS up-regulation by the core protein." evidence="20">
    <original>F</original>
    <variation>Y</variation>
    <location>
        <position position="164"/>
    </location>
</feature>
<feature type="strand" evidence="22">
    <location>
        <begin position="1039"/>
        <end position="1041"/>
    </location>
</feature>
<feature type="helix" evidence="22">
    <location>
        <begin position="1045"/>
        <end position="1054"/>
    </location>
</feature>
<feature type="strand" evidence="22">
    <location>
        <begin position="1063"/>
        <end position="1069"/>
    </location>
</feature>
<feature type="strand" evidence="22">
    <location>
        <begin position="1074"/>
        <end position="1080"/>
    </location>
</feature>
<feature type="strand" evidence="22">
    <location>
        <begin position="1083"/>
        <end position="1087"/>
    </location>
</feature>
<feature type="helix" evidence="22">
    <location>
        <begin position="1088"/>
        <end position="1091"/>
    </location>
</feature>
<feature type="strand" evidence="22">
    <location>
        <begin position="1098"/>
        <end position="1101"/>
    </location>
</feature>
<feature type="strand" evidence="22">
    <location>
        <begin position="1106"/>
        <end position="1109"/>
    </location>
</feature>
<feature type="turn" evidence="22">
    <location>
        <begin position="1110"/>
        <end position="1113"/>
    </location>
</feature>
<feature type="strand" evidence="22">
    <location>
        <begin position="1114"/>
        <end position="1118"/>
    </location>
</feature>
<feature type="strand" evidence="22">
    <location>
        <begin position="1135"/>
        <end position="1139"/>
    </location>
</feature>
<feature type="strand" evidence="22">
    <location>
        <begin position="1145"/>
        <end position="1150"/>
    </location>
</feature>
<feature type="strand" evidence="22">
    <location>
        <begin position="1152"/>
        <end position="1163"/>
    </location>
</feature>
<feature type="helix" evidence="22">
    <location>
        <begin position="1164"/>
        <end position="1166"/>
    </location>
</feature>
<feature type="turn" evidence="22">
    <location>
        <begin position="1167"/>
        <end position="1169"/>
    </location>
</feature>
<feature type="strand" evidence="22">
    <location>
        <begin position="1174"/>
        <end position="1176"/>
    </location>
</feature>
<feature type="strand" evidence="22">
    <location>
        <begin position="1182"/>
        <end position="1192"/>
    </location>
</feature>
<feature type="strand" evidence="22">
    <location>
        <begin position="1195"/>
        <end position="1203"/>
    </location>
</feature>
<feature type="helix" evidence="22">
    <location>
        <begin position="1205"/>
        <end position="1208"/>
    </location>
</feature>
<feature type="strand" evidence="22">
    <location>
        <begin position="1685"/>
        <end position="1692"/>
    </location>
</feature>
<keyword id="KW-0002">3D-structure</keyword>
<keyword id="KW-0007">Acetylation</keyword>
<keyword id="KW-1072">Activation of host autophagy by virus</keyword>
<keyword id="KW-0053">Apoptosis</keyword>
<keyword id="KW-0067">ATP-binding</keyword>
<keyword id="KW-0167">Capsid protein</keyword>
<keyword id="KW-1165">Clathrin-mediated endocytosis of virus by host</keyword>
<keyword id="KW-1015">Disulfide bond</keyword>
<keyword id="KW-1170">Fusion of virus membrane with host endosomal membrane</keyword>
<keyword id="KW-1168">Fusion of virus membrane with host membrane</keyword>
<keyword id="KW-1078">G1/S host cell cycle checkpoint dysregulation by virus</keyword>
<keyword id="KW-0325">Glycoprotein</keyword>
<keyword id="KW-0347">Helicase</keyword>
<keyword id="KW-1032">Host cell membrane</keyword>
<keyword id="KW-1035">Host cytoplasm</keyword>
<keyword id="KW-1038">Host endoplasmic reticulum</keyword>
<keyword id="KW-1041">Host lipid droplet</keyword>
<keyword id="KW-1043">Host membrane</keyword>
<keyword id="KW-1045">Host mitochondrion</keyword>
<keyword id="KW-1048">Host nucleus</keyword>
<keyword id="KW-0945">Host-virus interaction</keyword>
<keyword id="KW-0378">Hydrolase</keyword>
<keyword id="KW-1090">Inhibition of host innate immune response by virus</keyword>
<keyword id="KW-1114">Inhibition of host interferon signaling pathway by virus</keyword>
<keyword id="KW-1097">Inhibition of host MAVS by virus</keyword>
<keyword id="KW-1113">Inhibition of host RLR pathway by virus</keyword>
<keyword id="KW-1105">Inhibition of host STAT1 by virus</keyword>
<keyword id="KW-1110">Inhibition of host TRAFs by virus</keyword>
<keyword id="KW-0922">Interferon antiviral system evasion</keyword>
<keyword id="KW-0407">Ion channel</keyword>
<keyword id="KW-0406">Ion transport</keyword>
<keyword id="KW-1017">Isopeptide bond</keyword>
<keyword id="KW-0449">Lipoprotein</keyword>
<keyword id="KW-0460">Magnesium</keyword>
<keyword id="KW-0472">Membrane</keyword>
<keyword id="KW-0479">Metal-binding</keyword>
<keyword id="KW-1121">Modulation of host cell cycle by virus</keyword>
<keyword id="KW-0511">Multifunctional enzyme</keyword>
<keyword id="KW-0547">Nucleotide-binding</keyword>
<keyword id="KW-0548">Nucleotidyltransferase</keyword>
<keyword id="KW-0553">Oncogene</keyword>
<keyword id="KW-0564">Palmitate</keyword>
<keyword id="KW-0597">Phosphoprotein</keyword>
<keyword id="KW-0645">Protease</keyword>
<keyword id="KW-0687">Ribonucleoprotein</keyword>
<keyword id="KW-0694">RNA-binding</keyword>
<keyword id="KW-0696">RNA-directed RNA polymerase</keyword>
<keyword id="KW-0720">Serine protease</keyword>
<keyword id="KW-0729">SH3-binding</keyword>
<keyword id="KW-0788">Thiol protease</keyword>
<keyword id="KW-0804">Transcription</keyword>
<keyword id="KW-0805">Transcription regulation</keyword>
<keyword id="KW-0808">Transferase</keyword>
<keyword id="KW-0812">Transmembrane</keyword>
<keyword id="KW-1133">Transmembrane helix</keyword>
<keyword id="KW-0813">Transport</keyword>
<keyword id="KW-0832">Ubl conjugation</keyword>
<keyword id="KW-1161">Viral attachment to host cell</keyword>
<keyword id="KW-0261">Viral envelope protein</keyword>
<keyword id="KW-0899">Viral immunoevasion</keyword>
<keyword id="KW-1182">Viral ion channel</keyword>
<keyword id="KW-0543">Viral nucleoprotein</keyword>
<keyword id="KW-1162">Viral penetration into host cytoplasm</keyword>
<keyword id="KW-0693">Viral RNA replication</keyword>
<keyword id="KW-0946">Virion</keyword>
<keyword id="KW-1164">Virus endocytosis by host</keyword>
<keyword id="KW-1160">Virus entry into host cell</keyword>
<keyword id="KW-0862">Zinc</keyword>
<accession>Q81258</accession>
<evidence type="ECO:0000250" key="1">
    <source>
        <dbReference type="UniProtKB" id="O92972"/>
    </source>
</evidence>
<evidence type="ECO:0000250" key="2">
    <source>
        <dbReference type="UniProtKB" id="P26662"/>
    </source>
</evidence>
<evidence type="ECO:0000250" key="3">
    <source>
        <dbReference type="UniProtKB" id="P26663"/>
    </source>
</evidence>
<evidence type="ECO:0000250" key="4">
    <source>
        <dbReference type="UniProtKB" id="P26664"/>
    </source>
</evidence>
<evidence type="ECO:0000250" key="5">
    <source>
        <dbReference type="UniProtKB" id="P27958"/>
    </source>
</evidence>
<evidence type="ECO:0000250" key="6">
    <source>
        <dbReference type="UniProtKB" id="P29846"/>
    </source>
</evidence>
<evidence type="ECO:0000250" key="7">
    <source>
        <dbReference type="UniProtKB" id="Q01403"/>
    </source>
</evidence>
<evidence type="ECO:0000250" key="8">
    <source>
        <dbReference type="UniProtKB" id="Q03463"/>
    </source>
</evidence>
<evidence type="ECO:0000250" key="9">
    <source>
        <dbReference type="UniProtKB" id="Q5EG65"/>
    </source>
</evidence>
<evidence type="ECO:0000250" key="10">
    <source>
        <dbReference type="UniProtKB" id="Q913V3"/>
    </source>
</evidence>
<evidence type="ECO:0000250" key="11">
    <source>
        <dbReference type="UniProtKB" id="Q99IB8"/>
    </source>
</evidence>
<evidence type="ECO:0000250" key="12">
    <source>
        <dbReference type="UniProtKB" id="Q9WMX2"/>
    </source>
</evidence>
<evidence type="ECO:0000255" key="13"/>
<evidence type="ECO:0000255" key="14">
    <source>
        <dbReference type="PROSITE-ProRule" id="PRU00539"/>
    </source>
</evidence>
<evidence type="ECO:0000255" key="15">
    <source>
        <dbReference type="PROSITE-ProRule" id="PRU00541"/>
    </source>
</evidence>
<evidence type="ECO:0000255" key="16">
    <source>
        <dbReference type="PROSITE-ProRule" id="PRU00542"/>
    </source>
</evidence>
<evidence type="ECO:0000255" key="17">
    <source>
        <dbReference type="PROSITE-ProRule" id="PRU01030"/>
    </source>
</evidence>
<evidence type="ECO:0000255" key="18">
    <source>
        <dbReference type="PROSITE-ProRule" id="PRU01166"/>
    </source>
</evidence>
<evidence type="ECO:0000256" key="19">
    <source>
        <dbReference type="SAM" id="MobiDB-lite"/>
    </source>
</evidence>
<evidence type="ECO:0000269" key="20">
    <source>
    </source>
</evidence>
<evidence type="ECO:0000305" key="21"/>
<evidence type="ECO:0007829" key="22">
    <source>
        <dbReference type="PDB" id="6P6S"/>
    </source>
</evidence>
<organismHost>
    <name type="scientific">Homo sapiens</name>
    <name type="common">Human</name>
    <dbReference type="NCBI Taxonomy" id="9606"/>
</organismHost>
<organism>
    <name type="scientific">Hepatitis C virus genotype 3a (isolate NZL1)</name>
    <name type="common">HCV</name>
    <dbReference type="NCBI Taxonomy" id="356415"/>
    <lineage>
        <taxon>Viruses</taxon>
        <taxon>Riboviria</taxon>
        <taxon>Orthornavirae</taxon>
        <taxon>Kitrinoviricota</taxon>
        <taxon>Flasuviricetes</taxon>
        <taxon>Amarillovirales</taxon>
        <taxon>Flaviviridae</taxon>
        <taxon>Hepacivirus</taxon>
        <taxon>Hepacivirus hominis</taxon>
    </lineage>
</organism>
<reference key="1">
    <citation type="journal article" date="1994" name="J. Gen. Virol.">
        <title>Entire nucleotide sequence and characterization of a hepatitis C virus of genotype V/3a.</title>
        <authorList>
            <person name="Sakamoto M."/>
            <person name="Akahane Y."/>
            <person name="Tsuda F."/>
            <person name="Tanaka T."/>
            <person name="Woodfield D.G."/>
            <person name="Okamoto H."/>
        </authorList>
    </citation>
    <scope>NUCLEOTIDE SEQUENCE [GENOMIC RNA]</scope>
</reference>
<reference key="2">
    <citation type="journal article" date="2007" name="J. Hepatol.">
        <title>Up-regulation of fatty acid synthase promoter by hepatitis C virus core protein: genotype-3a core has a stronger effect than genotype-1b core.</title>
        <authorList>
            <person name="Jackel-Cram C."/>
            <person name="Babiuk L.A."/>
            <person name="Liu Q."/>
        </authorList>
    </citation>
    <scope>SUBCELLULAR LOCATION (MATURE CORE PROTEIN)</scope>
    <scope>FUNCTION (MATURE CORE PROTEIN)</scope>
    <scope>MUTAGENESIS OF PHE-164</scope>
</reference>
<reference key="3">
    <citation type="journal article" date="2000" name="J. Viral Hepat.">
        <title>Properties of the hepatitis C virus core protein: a structural protein that modulates cellular processes.</title>
        <authorList>
            <person name="McLauchlan J."/>
        </authorList>
    </citation>
    <scope>REVIEW</scope>
</reference>
<reference key="4">
    <citation type="journal article" date="2004" name="Hepatology">
        <title>Structural biology of hepatitis C virus.</title>
        <authorList>
            <person name="Penin F."/>
            <person name="Dubuisson J."/>
            <person name="Rey F.A."/>
            <person name="Moradpour D."/>
            <person name="Pawlotsky J.-M."/>
        </authorList>
    </citation>
    <scope>REVIEW</scope>
</reference>
<dbReference type="EC" id="3.4.22.-" evidence="3"/>
<dbReference type="EC" id="3.4.21.98" evidence="5"/>
<dbReference type="EC" id="3.6.1.15" evidence="5"/>
<dbReference type="EC" id="3.6.4.13" evidence="5"/>
<dbReference type="EC" id="2.7.7.48" evidence="5"/>
<dbReference type="EMBL" id="D17763">
    <property type="protein sequence ID" value="BAA04609.1"/>
    <property type="molecule type" value="Genomic_RNA"/>
</dbReference>
<dbReference type="PIR" id="PQ0401">
    <property type="entry name" value="PQ0401"/>
</dbReference>
<dbReference type="PIR" id="PQ0804">
    <property type="entry name" value="PQ0804"/>
</dbReference>
<dbReference type="RefSeq" id="YP_001469631.1">
    <property type="nucleotide sequence ID" value="NC_009824.1"/>
</dbReference>
<dbReference type="PDB" id="6P6S">
    <property type="method" value="X-ray"/>
    <property type="resolution" value="2.00 A"/>
    <property type="chains" value="A=1032-1684"/>
</dbReference>
<dbReference type="PDBsum" id="6P6S"/>
<dbReference type="SMR" id="Q81258"/>
<dbReference type="BindingDB" id="Q81258"/>
<dbReference type="ChEMBL" id="CHEMBL3707464"/>
<dbReference type="MEROPS" id="S29.001"/>
<dbReference type="ABCD" id="Q81258">
    <property type="antibodies" value="3 sequenced antibodies"/>
</dbReference>
<dbReference type="GeneID" id="11027185"/>
<dbReference type="KEGG" id="vg:11027185"/>
<dbReference type="euHCVdb" id="D17763"/>
<dbReference type="Proteomes" id="UP000002672">
    <property type="component" value="Genome"/>
</dbReference>
<dbReference type="GO" id="GO:0044167">
    <property type="term" value="C:host cell endoplasmic reticulum membrane"/>
    <property type="evidence" value="ECO:0007669"/>
    <property type="project" value="UniProtKB-SubCell"/>
</dbReference>
<dbReference type="GO" id="GO:0044186">
    <property type="term" value="C:host cell lipid droplet"/>
    <property type="evidence" value="ECO:0007669"/>
    <property type="project" value="UniProtKB-SubCell"/>
</dbReference>
<dbReference type="GO" id="GO:0044191">
    <property type="term" value="C:host cell mitochondrial membrane"/>
    <property type="evidence" value="ECO:0007669"/>
    <property type="project" value="UniProtKB-SubCell"/>
</dbReference>
<dbReference type="GO" id="GO:0042025">
    <property type="term" value="C:host cell nucleus"/>
    <property type="evidence" value="ECO:0007669"/>
    <property type="project" value="UniProtKB-SubCell"/>
</dbReference>
<dbReference type="GO" id="GO:0044220">
    <property type="term" value="C:host cell perinuclear region of cytoplasm"/>
    <property type="evidence" value="ECO:0007669"/>
    <property type="project" value="UniProtKB-SubCell"/>
</dbReference>
<dbReference type="GO" id="GO:0020002">
    <property type="term" value="C:host cell plasma membrane"/>
    <property type="evidence" value="ECO:0007669"/>
    <property type="project" value="UniProtKB-SubCell"/>
</dbReference>
<dbReference type="GO" id="GO:0016020">
    <property type="term" value="C:membrane"/>
    <property type="evidence" value="ECO:0007669"/>
    <property type="project" value="UniProtKB-KW"/>
</dbReference>
<dbReference type="GO" id="GO:1990904">
    <property type="term" value="C:ribonucleoprotein complex"/>
    <property type="evidence" value="ECO:0007669"/>
    <property type="project" value="UniProtKB-KW"/>
</dbReference>
<dbReference type="GO" id="GO:0019031">
    <property type="term" value="C:viral envelope"/>
    <property type="evidence" value="ECO:0007669"/>
    <property type="project" value="UniProtKB-KW"/>
</dbReference>
<dbReference type="GO" id="GO:0019013">
    <property type="term" value="C:viral nucleocapsid"/>
    <property type="evidence" value="ECO:0007669"/>
    <property type="project" value="UniProtKB-KW"/>
</dbReference>
<dbReference type="GO" id="GO:0055036">
    <property type="term" value="C:virion membrane"/>
    <property type="evidence" value="ECO:0007669"/>
    <property type="project" value="UniProtKB-SubCell"/>
</dbReference>
<dbReference type="GO" id="GO:0005524">
    <property type="term" value="F:ATP binding"/>
    <property type="evidence" value="ECO:0007669"/>
    <property type="project" value="UniProtKB-KW"/>
</dbReference>
<dbReference type="GO" id="GO:0016887">
    <property type="term" value="F:ATP hydrolysis activity"/>
    <property type="evidence" value="ECO:0007669"/>
    <property type="project" value="RHEA"/>
</dbReference>
<dbReference type="GO" id="GO:0015267">
    <property type="term" value="F:channel activity"/>
    <property type="evidence" value="ECO:0007669"/>
    <property type="project" value="UniProtKB-KW"/>
</dbReference>
<dbReference type="GO" id="GO:0004197">
    <property type="term" value="F:cysteine-type endopeptidase activity"/>
    <property type="evidence" value="ECO:0007669"/>
    <property type="project" value="InterPro"/>
</dbReference>
<dbReference type="GO" id="GO:0003723">
    <property type="term" value="F:RNA binding"/>
    <property type="evidence" value="ECO:0007669"/>
    <property type="project" value="UniProtKB-KW"/>
</dbReference>
<dbReference type="GO" id="GO:0003724">
    <property type="term" value="F:RNA helicase activity"/>
    <property type="evidence" value="ECO:0007669"/>
    <property type="project" value="UniProtKB-EC"/>
</dbReference>
<dbReference type="GO" id="GO:0003968">
    <property type="term" value="F:RNA-directed RNA polymerase activity"/>
    <property type="evidence" value="ECO:0007669"/>
    <property type="project" value="UniProtKB-KW"/>
</dbReference>
<dbReference type="GO" id="GO:0004252">
    <property type="term" value="F:serine-type endopeptidase activity"/>
    <property type="evidence" value="ECO:0007669"/>
    <property type="project" value="InterPro"/>
</dbReference>
<dbReference type="GO" id="GO:0017124">
    <property type="term" value="F:SH3 domain binding"/>
    <property type="evidence" value="ECO:0007669"/>
    <property type="project" value="UniProtKB-KW"/>
</dbReference>
<dbReference type="GO" id="GO:0005198">
    <property type="term" value="F:structural molecule activity"/>
    <property type="evidence" value="ECO:0007669"/>
    <property type="project" value="InterPro"/>
</dbReference>
<dbReference type="GO" id="GO:0008270">
    <property type="term" value="F:zinc ion binding"/>
    <property type="evidence" value="ECO:0007669"/>
    <property type="project" value="InterPro"/>
</dbReference>
<dbReference type="GO" id="GO:0075512">
    <property type="term" value="P:clathrin-dependent endocytosis of virus by host cell"/>
    <property type="evidence" value="ECO:0007669"/>
    <property type="project" value="UniProtKB-KW"/>
</dbReference>
<dbReference type="GO" id="GO:0039654">
    <property type="term" value="P:fusion of virus membrane with host endosome membrane"/>
    <property type="evidence" value="ECO:0007669"/>
    <property type="project" value="UniProtKB-KW"/>
</dbReference>
<dbReference type="GO" id="GO:0034220">
    <property type="term" value="P:monoatomic ion transmembrane transport"/>
    <property type="evidence" value="ECO:0007669"/>
    <property type="project" value="UniProtKB-KW"/>
</dbReference>
<dbReference type="GO" id="GO:0006508">
    <property type="term" value="P:proteolysis"/>
    <property type="evidence" value="ECO:0007669"/>
    <property type="project" value="UniProtKB-KW"/>
</dbReference>
<dbReference type="GO" id="GO:0039520">
    <property type="term" value="P:symbiont-mediated activation of host autophagy"/>
    <property type="evidence" value="ECO:0007669"/>
    <property type="project" value="UniProtKB-KW"/>
</dbReference>
<dbReference type="GO" id="GO:0039645">
    <property type="term" value="P:symbiont-mediated perturbation of host cell cycle G1/S transition checkpoint"/>
    <property type="evidence" value="ECO:0007669"/>
    <property type="project" value="UniProtKB-KW"/>
</dbReference>
<dbReference type="GO" id="GO:0039545">
    <property type="term" value="P:symbiont-mediated suppression of host cytoplasmic pattern recognition receptor signaling pathway via inhibition of MAVS activity"/>
    <property type="evidence" value="ECO:0007669"/>
    <property type="project" value="UniProtKB-KW"/>
</dbReference>
<dbReference type="GO" id="GO:0039563">
    <property type="term" value="P:symbiont-mediated suppression of host JAK-STAT cascade via inhibition of STAT1 activity"/>
    <property type="evidence" value="ECO:0007669"/>
    <property type="project" value="UniProtKB-KW"/>
</dbReference>
<dbReference type="GO" id="GO:0039527">
    <property type="term" value="P:symbiont-mediated suppression of host TRAF-mediated signal transduction"/>
    <property type="evidence" value="ECO:0007669"/>
    <property type="project" value="UniProtKB-KW"/>
</dbReference>
<dbReference type="GO" id="GO:0039502">
    <property type="term" value="P:symbiont-mediated suppression of host type I interferon-mediated signaling pathway"/>
    <property type="evidence" value="ECO:0007669"/>
    <property type="project" value="UniProtKB-KW"/>
</dbReference>
<dbReference type="GO" id="GO:0019087">
    <property type="term" value="P:symbiont-mediated transformation of host cell"/>
    <property type="evidence" value="ECO:0007669"/>
    <property type="project" value="InterPro"/>
</dbReference>
<dbReference type="GO" id="GO:0039694">
    <property type="term" value="P:viral RNA genome replication"/>
    <property type="evidence" value="ECO:0007669"/>
    <property type="project" value="InterPro"/>
</dbReference>
<dbReference type="GO" id="GO:0019062">
    <property type="term" value="P:virion attachment to host cell"/>
    <property type="evidence" value="ECO:0007669"/>
    <property type="project" value="UniProtKB-KW"/>
</dbReference>
<dbReference type="CDD" id="cd20903">
    <property type="entry name" value="HCV_p7"/>
    <property type="match status" value="1"/>
</dbReference>
<dbReference type="CDD" id="cd23202">
    <property type="entry name" value="Hepacivirus_RdRp"/>
    <property type="match status" value="1"/>
</dbReference>
<dbReference type="FunFam" id="3.30.160.890:FF:000001">
    <property type="entry name" value="Genome polyprotein"/>
    <property type="match status" value="1"/>
</dbReference>
<dbReference type="FunFam" id="3.30.70.270:FF:000015">
    <property type="entry name" value="Genome polyprotein"/>
    <property type="match status" value="1"/>
</dbReference>
<dbReference type="FunFam" id="3.40.50.300:FF:000557">
    <property type="entry name" value="Genome polyprotein"/>
    <property type="match status" value="1"/>
</dbReference>
<dbReference type="FunFam" id="3.40.50.300:FF:000717">
    <property type="entry name" value="Genome polyprotein"/>
    <property type="match status" value="1"/>
</dbReference>
<dbReference type="Gene3D" id="2.40.10.120">
    <property type="match status" value="1"/>
</dbReference>
<dbReference type="Gene3D" id="3.30.70.270">
    <property type="match status" value="2"/>
</dbReference>
<dbReference type="Gene3D" id="6.10.250.1610">
    <property type="match status" value="1"/>
</dbReference>
<dbReference type="Gene3D" id="6.10.250.1750">
    <property type="match status" value="1"/>
</dbReference>
<dbReference type="Gene3D" id="6.10.250.2920">
    <property type="match status" value="1"/>
</dbReference>
<dbReference type="Gene3D" id="2.20.25.210">
    <property type="entry name" value="Hepatitis C NS5A, domain 1B"/>
    <property type="match status" value="1"/>
</dbReference>
<dbReference type="Gene3D" id="4.10.710.10">
    <property type="entry name" value="Hepatitis C Virus Capsid Protein, Chain A"/>
    <property type="match status" value="1"/>
</dbReference>
<dbReference type="Gene3D" id="3.30.160.890">
    <property type="entry name" value="Hepatitis C virus envelope glycoprotein E1, chain C"/>
    <property type="match status" value="1"/>
</dbReference>
<dbReference type="Gene3D" id="2.30.30.710">
    <property type="entry name" value="Hepatitis C virus non-structural protein NS2, C-terminal domain"/>
    <property type="match status" value="1"/>
</dbReference>
<dbReference type="Gene3D" id="1.20.1280.150">
    <property type="entry name" value="Hepatitis C virus non-structural protein NS2, N-terminal domain"/>
    <property type="match status" value="1"/>
</dbReference>
<dbReference type="Gene3D" id="2.20.25.220">
    <property type="entry name" value="Hepatitis C virus NS5A, 1B domain"/>
    <property type="match status" value="1"/>
</dbReference>
<dbReference type="Gene3D" id="3.40.50.300">
    <property type="entry name" value="P-loop containing nucleotide triphosphate hydrolases"/>
    <property type="match status" value="2"/>
</dbReference>
<dbReference type="Gene3D" id="1.10.820.10">
    <property type="entry name" value="RNA Helicase Chain A , domain 3"/>
    <property type="match status" value="1"/>
</dbReference>
<dbReference type="Gene3D" id="2.40.10.10">
    <property type="entry name" value="Trypsin-like serine proteases"/>
    <property type="match status" value="1"/>
</dbReference>
<dbReference type="InterPro" id="IPR043502">
    <property type="entry name" value="DNA/RNA_pol_sf"/>
</dbReference>
<dbReference type="InterPro" id="IPR011492">
    <property type="entry name" value="Flavi_DEAD"/>
</dbReference>
<dbReference type="InterPro" id="IPR002521">
    <property type="entry name" value="HCV_Core_C"/>
</dbReference>
<dbReference type="InterPro" id="IPR044896">
    <property type="entry name" value="HCV_core_chain_A"/>
</dbReference>
<dbReference type="InterPro" id="IPR002522">
    <property type="entry name" value="HCV_core_N"/>
</dbReference>
<dbReference type="InterPro" id="IPR002519">
    <property type="entry name" value="HCV_Env"/>
</dbReference>
<dbReference type="InterPro" id="IPR002531">
    <property type="entry name" value="HCV_NS1"/>
</dbReference>
<dbReference type="InterPro" id="IPR002518">
    <property type="entry name" value="HCV_NS2"/>
</dbReference>
<dbReference type="InterPro" id="IPR042205">
    <property type="entry name" value="HCV_NS2_C"/>
</dbReference>
<dbReference type="InterPro" id="IPR042209">
    <property type="entry name" value="HCV_NS2_N"/>
</dbReference>
<dbReference type="InterPro" id="IPR000745">
    <property type="entry name" value="HCV_NS4a"/>
</dbReference>
<dbReference type="InterPro" id="IPR001490">
    <property type="entry name" value="HCV_NS4b"/>
</dbReference>
<dbReference type="InterPro" id="IPR002868">
    <property type="entry name" value="HCV_NS5a"/>
</dbReference>
<dbReference type="InterPro" id="IPR013192">
    <property type="entry name" value="HCV_NS5A_1a"/>
</dbReference>
<dbReference type="InterPro" id="IPR013193">
    <property type="entry name" value="HCV_NS5a_1B_dom"/>
</dbReference>
<dbReference type="InterPro" id="IPR038568">
    <property type="entry name" value="HCV_NS5A_1B_sf"/>
</dbReference>
<dbReference type="InterPro" id="IPR024350">
    <property type="entry name" value="HCV_NS5a_C"/>
</dbReference>
<dbReference type="InterPro" id="IPR049913">
    <property type="entry name" value="HCV_p7"/>
</dbReference>
<dbReference type="InterPro" id="IPR014001">
    <property type="entry name" value="Helicase_ATP-bd"/>
</dbReference>
<dbReference type="InterPro" id="IPR001650">
    <property type="entry name" value="Helicase_C-like"/>
</dbReference>
<dbReference type="InterPro" id="IPR004109">
    <property type="entry name" value="HepC_NS3_protease"/>
</dbReference>
<dbReference type="InterPro" id="IPR054175">
    <property type="entry name" value="NS3_helicase_C"/>
</dbReference>
<dbReference type="InterPro" id="IPR038170">
    <property type="entry name" value="NS5A_1a_sf"/>
</dbReference>
<dbReference type="InterPro" id="IPR027417">
    <property type="entry name" value="P-loop_NTPase"/>
</dbReference>
<dbReference type="InterPro" id="IPR009003">
    <property type="entry name" value="Peptidase_S1_PA"/>
</dbReference>
<dbReference type="InterPro" id="IPR043504">
    <property type="entry name" value="Peptidase_S1_PA_chymotrypsin"/>
</dbReference>
<dbReference type="InterPro" id="IPR043128">
    <property type="entry name" value="Rev_trsase/Diguanyl_cyclase"/>
</dbReference>
<dbReference type="InterPro" id="IPR007094">
    <property type="entry name" value="RNA-dir_pol_PSvirus"/>
</dbReference>
<dbReference type="InterPro" id="IPR002166">
    <property type="entry name" value="RNA_pol_HCV"/>
</dbReference>
<dbReference type="Pfam" id="PF07652">
    <property type="entry name" value="Flavi_DEAD"/>
    <property type="match status" value="1"/>
</dbReference>
<dbReference type="Pfam" id="PF01543">
    <property type="entry name" value="HCV_capsid"/>
    <property type="match status" value="1"/>
</dbReference>
<dbReference type="Pfam" id="PF01542">
    <property type="entry name" value="HCV_core"/>
    <property type="match status" value="1"/>
</dbReference>
<dbReference type="Pfam" id="PF01539">
    <property type="entry name" value="HCV_env"/>
    <property type="match status" value="1"/>
</dbReference>
<dbReference type="Pfam" id="PF01560">
    <property type="entry name" value="HCV_NS1"/>
    <property type="match status" value="1"/>
</dbReference>
<dbReference type="Pfam" id="PF01538">
    <property type="entry name" value="HCV_NS2"/>
    <property type="match status" value="1"/>
</dbReference>
<dbReference type="Pfam" id="PF01006">
    <property type="entry name" value="HCV_NS4a"/>
    <property type="match status" value="1"/>
</dbReference>
<dbReference type="Pfam" id="PF01001">
    <property type="entry name" value="HCV_NS4b"/>
    <property type="match status" value="1"/>
</dbReference>
<dbReference type="Pfam" id="PF01506">
    <property type="entry name" value="HCV_NS5a"/>
    <property type="match status" value="1"/>
</dbReference>
<dbReference type="Pfam" id="PF08300">
    <property type="entry name" value="HCV_NS5a_1a"/>
    <property type="match status" value="1"/>
</dbReference>
<dbReference type="Pfam" id="PF08301">
    <property type="entry name" value="HCV_NS5a_1b"/>
    <property type="match status" value="1"/>
</dbReference>
<dbReference type="Pfam" id="PF12941">
    <property type="entry name" value="HCV_NS5a_C"/>
    <property type="match status" value="1"/>
</dbReference>
<dbReference type="Pfam" id="PF22027">
    <property type="entry name" value="NS3_helicase_C"/>
    <property type="match status" value="1"/>
</dbReference>
<dbReference type="Pfam" id="PF02907">
    <property type="entry name" value="Peptidase_S29"/>
    <property type="match status" value="1"/>
</dbReference>
<dbReference type="Pfam" id="PF00998">
    <property type="entry name" value="RdRP_3"/>
    <property type="match status" value="1"/>
</dbReference>
<dbReference type="SMART" id="SM00487">
    <property type="entry name" value="DEXDc"/>
    <property type="match status" value="1"/>
</dbReference>
<dbReference type="SUPFAM" id="SSF56672">
    <property type="entry name" value="DNA/RNA polymerases"/>
    <property type="match status" value="1"/>
</dbReference>
<dbReference type="SUPFAM" id="SSF52540">
    <property type="entry name" value="P-loop containing nucleoside triphosphate hydrolases"/>
    <property type="match status" value="2"/>
</dbReference>
<dbReference type="SUPFAM" id="SSF50494">
    <property type="entry name" value="Trypsin-like serine proteases"/>
    <property type="match status" value="1"/>
</dbReference>
<dbReference type="PROSITE" id="PS51693">
    <property type="entry name" value="HCV_NS2_PRO"/>
    <property type="match status" value="1"/>
</dbReference>
<dbReference type="PROSITE" id="PS51192">
    <property type="entry name" value="HELICASE_ATP_BIND_1"/>
    <property type="match status" value="1"/>
</dbReference>
<dbReference type="PROSITE" id="PS51194">
    <property type="entry name" value="HELICASE_CTER"/>
    <property type="match status" value="1"/>
</dbReference>
<dbReference type="PROSITE" id="PS51822">
    <property type="entry name" value="HV_PV_NS3_PRO"/>
    <property type="match status" value="1"/>
</dbReference>
<dbReference type="PROSITE" id="PS50507">
    <property type="entry name" value="RDRP_SSRNA_POS"/>
    <property type="match status" value="1"/>
</dbReference>